<sequence length="144" mass="14980">MRLNTLSPAEGSKKAGKRLGRGIGSGLGKTGGRGHKGQKSRSGGGVRRGFEGGQMPLYRRLPKFGFTSRKAAITAEIRLSDLAKVEGGVVDLNTLKAANIIGIQIEFAKVILAGEVTTPVTVRGLRVTKGARAAIEAAGGKIEE</sequence>
<keyword id="KW-0002">3D-structure</keyword>
<keyword id="KW-0903">Direct protein sequencing</keyword>
<keyword id="KW-1185">Reference proteome</keyword>
<keyword id="KW-0687">Ribonucleoprotein</keyword>
<keyword id="KW-0689">Ribosomal protein</keyword>
<keyword id="KW-0694">RNA-binding</keyword>
<keyword id="KW-0699">rRNA-binding</keyword>
<dbReference type="EMBL" id="X01563">
    <property type="protein sequence ID" value="CAA25724.1"/>
    <property type="molecule type" value="Genomic_DNA"/>
</dbReference>
<dbReference type="EMBL" id="U18997">
    <property type="protein sequence ID" value="AAA58098.1"/>
    <property type="molecule type" value="Genomic_DNA"/>
</dbReference>
<dbReference type="EMBL" id="U00096">
    <property type="protein sequence ID" value="AAC76326.1"/>
    <property type="molecule type" value="Genomic_DNA"/>
</dbReference>
<dbReference type="EMBL" id="AP009048">
    <property type="protein sequence ID" value="BAE77990.1"/>
    <property type="molecule type" value="Genomic_DNA"/>
</dbReference>
<dbReference type="PIR" id="A02794">
    <property type="entry name" value="R5EC15"/>
</dbReference>
<dbReference type="RefSeq" id="NP_417760.1">
    <property type="nucleotide sequence ID" value="NC_000913.3"/>
</dbReference>
<dbReference type="RefSeq" id="WP_001238914.1">
    <property type="nucleotide sequence ID" value="NZ_SSZK01000040.1"/>
</dbReference>
<dbReference type="PDB" id="1ML5">
    <property type="method" value="EM"/>
    <property type="resolution" value="14.00 A"/>
    <property type="chains" value="o=2-144"/>
</dbReference>
<dbReference type="PDB" id="2J28">
    <property type="method" value="EM"/>
    <property type="resolution" value="8.00 A"/>
    <property type="chains" value="L=1-144"/>
</dbReference>
<dbReference type="PDB" id="2RDO">
    <property type="method" value="EM"/>
    <property type="resolution" value="9.10 A"/>
    <property type="chains" value="L=1-144"/>
</dbReference>
<dbReference type="PDB" id="3BBX">
    <property type="method" value="EM"/>
    <property type="resolution" value="10.00 A"/>
    <property type="chains" value="L=1-144"/>
</dbReference>
<dbReference type="PDB" id="3IY9">
    <property type="method" value="EM"/>
    <property type="resolution" value="14.10 A"/>
    <property type="chains" value="L=1-144"/>
</dbReference>
<dbReference type="PDB" id="3J5L">
    <property type="method" value="EM"/>
    <property type="resolution" value="6.60 A"/>
    <property type="chains" value="L=2-144"/>
</dbReference>
<dbReference type="PDB" id="3J7Z">
    <property type="method" value="EM"/>
    <property type="resolution" value="3.90 A"/>
    <property type="chains" value="L=1-144"/>
</dbReference>
<dbReference type="PDB" id="3J8G">
    <property type="method" value="EM"/>
    <property type="resolution" value="5.00 A"/>
    <property type="chains" value="L=1-144"/>
</dbReference>
<dbReference type="PDB" id="3J9Y">
    <property type="method" value="EM"/>
    <property type="resolution" value="3.90 A"/>
    <property type="chains" value="L=1-144"/>
</dbReference>
<dbReference type="PDB" id="3J9Z">
    <property type="method" value="EM"/>
    <property type="resolution" value="3.60 A"/>
    <property type="chains" value="LH=1-144"/>
</dbReference>
<dbReference type="PDB" id="3JA1">
    <property type="method" value="EM"/>
    <property type="resolution" value="3.60 A"/>
    <property type="chains" value="LN=1-144"/>
</dbReference>
<dbReference type="PDB" id="3JBU">
    <property type="method" value="EM"/>
    <property type="resolution" value="3.64 A"/>
    <property type="chains" value="l=1-144"/>
</dbReference>
<dbReference type="PDB" id="3JBV">
    <property type="method" value="EM"/>
    <property type="resolution" value="3.32 A"/>
    <property type="chains" value="l=1-144"/>
</dbReference>
<dbReference type="PDB" id="3JCD">
    <property type="method" value="EM"/>
    <property type="resolution" value="3.70 A"/>
    <property type="chains" value="L=1-144"/>
</dbReference>
<dbReference type="PDB" id="3JCE">
    <property type="method" value="EM"/>
    <property type="resolution" value="3.20 A"/>
    <property type="chains" value="L=1-144"/>
</dbReference>
<dbReference type="PDB" id="3JCJ">
    <property type="method" value="EM"/>
    <property type="resolution" value="3.70 A"/>
    <property type="chains" value="K=1-144"/>
</dbReference>
<dbReference type="PDB" id="3JCN">
    <property type="method" value="EM"/>
    <property type="resolution" value="4.60 A"/>
    <property type="chains" value="L=1-144"/>
</dbReference>
<dbReference type="PDB" id="4CSU">
    <property type="method" value="EM"/>
    <property type="resolution" value="5.50 A"/>
    <property type="chains" value="L=2-144"/>
</dbReference>
<dbReference type="PDB" id="4U1U">
    <property type="method" value="X-ray"/>
    <property type="resolution" value="2.95 A"/>
    <property type="chains" value="BL/DL=2-144"/>
</dbReference>
<dbReference type="PDB" id="4U1V">
    <property type="method" value="X-ray"/>
    <property type="resolution" value="3.00 A"/>
    <property type="chains" value="BL/DL=2-144"/>
</dbReference>
<dbReference type="PDB" id="4U20">
    <property type="method" value="X-ray"/>
    <property type="resolution" value="2.90 A"/>
    <property type="chains" value="BL/DL=2-144"/>
</dbReference>
<dbReference type="PDB" id="4U24">
    <property type="method" value="X-ray"/>
    <property type="resolution" value="2.90 A"/>
    <property type="chains" value="BL/DL=2-144"/>
</dbReference>
<dbReference type="PDB" id="4U25">
    <property type="method" value="X-ray"/>
    <property type="resolution" value="2.90 A"/>
    <property type="chains" value="BL/DL=2-144"/>
</dbReference>
<dbReference type="PDB" id="4U26">
    <property type="method" value="X-ray"/>
    <property type="resolution" value="2.80 A"/>
    <property type="chains" value="BL/DL=2-144"/>
</dbReference>
<dbReference type="PDB" id="4U27">
    <property type="method" value="X-ray"/>
    <property type="resolution" value="2.80 A"/>
    <property type="chains" value="BL/DL=2-144"/>
</dbReference>
<dbReference type="PDB" id="4UY8">
    <property type="method" value="EM"/>
    <property type="resolution" value="3.80 A"/>
    <property type="chains" value="L=2-144"/>
</dbReference>
<dbReference type="PDB" id="4V47">
    <property type="method" value="EM"/>
    <property type="resolution" value="12.30 A"/>
    <property type="chains" value="AJ=1-144"/>
</dbReference>
<dbReference type="PDB" id="4V48">
    <property type="method" value="EM"/>
    <property type="resolution" value="11.50 A"/>
    <property type="chains" value="AJ=1-144"/>
</dbReference>
<dbReference type="PDB" id="4V4H">
    <property type="method" value="X-ray"/>
    <property type="resolution" value="3.46 A"/>
    <property type="chains" value="BL/DL=1-144"/>
</dbReference>
<dbReference type="PDB" id="4V4Q">
    <property type="method" value="X-ray"/>
    <property type="resolution" value="3.46 A"/>
    <property type="chains" value="BL/DL=1-144"/>
</dbReference>
<dbReference type="PDB" id="4V4V">
    <property type="method" value="EM"/>
    <property type="resolution" value="15.00 A"/>
    <property type="chains" value="BJ=4-143"/>
</dbReference>
<dbReference type="PDB" id="4V4W">
    <property type="method" value="EM"/>
    <property type="resolution" value="15.00 A"/>
    <property type="chains" value="BJ=4-143"/>
</dbReference>
<dbReference type="PDB" id="4V50">
    <property type="method" value="X-ray"/>
    <property type="resolution" value="3.22 A"/>
    <property type="chains" value="BL/DL=1-144"/>
</dbReference>
<dbReference type="PDB" id="4V52">
    <property type="method" value="X-ray"/>
    <property type="resolution" value="3.21 A"/>
    <property type="chains" value="BL/DL=1-144"/>
</dbReference>
<dbReference type="PDB" id="4V53">
    <property type="method" value="X-ray"/>
    <property type="resolution" value="3.54 A"/>
    <property type="chains" value="BL/DL=1-144"/>
</dbReference>
<dbReference type="PDB" id="4V54">
    <property type="method" value="X-ray"/>
    <property type="resolution" value="3.30 A"/>
    <property type="chains" value="BL/DL=1-144"/>
</dbReference>
<dbReference type="PDB" id="4V55">
    <property type="method" value="X-ray"/>
    <property type="resolution" value="4.00 A"/>
    <property type="chains" value="BL/DL=1-144"/>
</dbReference>
<dbReference type="PDB" id="4V56">
    <property type="method" value="X-ray"/>
    <property type="resolution" value="3.93 A"/>
    <property type="chains" value="BL/DL=1-144"/>
</dbReference>
<dbReference type="PDB" id="4V57">
    <property type="method" value="X-ray"/>
    <property type="resolution" value="3.50 A"/>
    <property type="chains" value="BL/DL=1-144"/>
</dbReference>
<dbReference type="PDB" id="4V5B">
    <property type="method" value="X-ray"/>
    <property type="resolution" value="3.74 A"/>
    <property type="chains" value="AL/CL=1-144"/>
</dbReference>
<dbReference type="PDB" id="4V5H">
    <property type="method" value="EM"/>
    <property type="resolution" value="5.80 A"/>
    <property type="chains" value="BL=2-144"/>
</dbReference>
<dbReference type="PDB" id="4V5Y">
    <property type="method" value="X-ray"/>
    <property type="resolution" value="4.45 A"/>
    <property type="chains" value="BL/DL=1-144"/>
</dbReference>
<dbReference type="PDB" id="4V64">
    <property type="method" value="X-ray"/>
    <property type="resolution" value="3.50 A"/>
    <property type="chains" value="BL/DL=1-144"/>
</dbReference>
<dbReference type="PDB" id="4V65">
    <property type="method" value="EM"/>
    <property type="resolution" value="9.00 A"/>
    <property type="chains" value="BE=1-144"/>
</dbReference>
<dbReference type="PDB" id="4V66">
    <property type="method" value="EM"/>
    <property type="resolution" value="9.00 A"/>
    <property type="chains" value="BE=1-144"/>
</dbReference>
<dbReference type="PDB" id="4V69">
    <property type="method" value="EM"/>
    <property type="resolution" value="6.70 A"/>
    <property type="chains" value="BL=2-144"/>
</dbReference>
<dbReference type="PDB" id="4V6C">
    <property type="method" value="X-ray"/>
    <property type="resolution" value="3.19 A"/>
    <property type="chains" value="BL/DL=1-144"/>
</dbReference>
<dbReference type="PDB" id="4V6D">
    <property type="method" value="X-ray"/>
    <property type="resolution" value="3.81 A"/>
    <property type="chains" value="BL/DL=1-144"/>
</dbReference>
<dbReference type="PDB" id="4V6E">
    <property type="method" value="X-ray"/>
    <property type="resolution" value="3.71 A"/>
    <property type="chains" value="BL/DL=1-144"/>
</dbReference>
<dbReference type="PDB" id="4V6K">
    <property type="method" value="EM"/>
    <property type="resolution" value="8.25 A"/>
    <property type="chains" value="AM=1-144"/>
</dbReference>
<dbReference type="PDB" id="4V6L">
    <property type="method" value="EM"/>
    <property type="resolution" value="13.20 A"/>
    <property type="chains" value="BM=1-144"/>
</dbReference>
<dbReference type="PDB" id="4V6M">
    <property type="method" value="EM"/>
    <property type="resolution" value="7.10 A"/>
    <property type="chains" value="BL=1-144"/>
</dbReference>
<dbReference type="PDB" id="4V6N">
    <property type="method" value="EM"/>
    <property type="resolution" value="12.10 A"/>
    <property type="chains" value="AN=1-144"/>
</dbReference>
<dbReference type="PDB" id="4V6O">
    <property type="method" value="EM"/>
    <property type="resolution" value="14.70 A"/>
    <property type="chains" value="BN=1-144"/>
</dbReference>
<dbReference type="PDB" id="4V6P">
    <property type="method" value="EM"/>
    <property type="resolution" value="13.50 A"/>
    <property type="chains" value="BN=1-144"/>
</dbReference>
<dbReference type="PDB" id="4V6Q">
    <property type="method" value="EM"/>
    <property type="resolution" value="11.50 A"/>
    <property type="chains" value="BN=1-144"/>
</dbReference>
<dbReference type="PDB" id="4V6R">
    <property type="method" value="EM"/>
    <property type="resolution" value="11.50 A"/>
    <property type="chains" value="BN=1-144"/>
</dbReference>
<dbReference type="PDB" id="4V6S">
    <property type="method" value="EM"/>
    <property type="resolution" value="13.10 A"/>
    <property type="chains" value="AN=1-144"/>
</dbReference>
<dbReference type="PDB" id="4V6T">
    <property type="method" value="EM"/>
    <property type="resolution" value="8.30 A"/>
    <property type="chains" value="BL=2-144"/>
</dbReference>
<dbReference type="PDB" id="4V6V">
    <property type="method" value="EM"/>
    <property type="resolution" value="9.80 A"/>
    <property type="chains" value="BP=1-144"/>
</dbReference>
<dbReference type="PDB" id="4V6Y">
    <property type="method" value="EM"/>
    <property type="resolution" value="12.00 A"/>
    <property type="chains" value="BL=1-144"/>
</dbReference>
<dbReference type="PDB" id="4V6Z">
    <property type="method" value="EM"/>
    <property type="resolution" value="12.00 A"/>
    <property type="chains" value="BL=1-144"/>
</dbReference>
<dbReference type="PDB" id="4V70">
    <property type="method" value="EM"/>
    <property type="resolution" value="17.00 A"/>
    <property type="chains" value="BL=1-144"/>
</dbReference>
<dbReference type="PDB" id="4V71">
    <property type="method" value="EM"/>
    <property type="resolution" value="20.00 A"/>
    <property type="chains" value="BL=1-144"/>
</dbReference>
<dbReference type="PDB" id="4V72">
    <property type="method" value="EM"/>
    <property type="resolution" value="13.00 A"/>
    <property type="chains" value="BL=1-144"/>
</dbReference>
<dbReference type="PDB" id="4V73">
    <property type="method" value="EM"/>
    <property type="resolution" value="15.00 A"/>
    <property type="chains" value="BL=1-144"/>
</dbReference>
<dbReference type="PDB" id="4V74">
    <property type="method" value="EM"/>
    <property type="resolution" value="17.00 A"/>
    <property type="chains" value="BL=1-144"/>
</dbReference>
<dbReference type="PDB" id="4V75">
    <property type="method" value="EM"/>
    <property type="resolution" value="12.00 A"/>
    <property type="chains" value="BL=1-144"/>
</dbReference>
<dbReference type="PDB" id="4V76">
    <property type="method" value="EM"/>
    <property type="resolution" value="17.00 A"/>
    <property type="chains" value="BL=1-144"/>
</dbReference>
<dbReference type="PDB" id="4V77">
    <property type="method" value="EM"/>
    <property type="resolution" value="17.00 A"/>
    <property type="chains" value="BL=1-144"/>
</dbReference>
<dbReference type="PDB" id="4V78">
    <property type="method" value="EM"/>
    <property type="resolution" value="20.00 A"/>
    <property type="chains" value="BL=1-144"/>
</dbReference>
<dbReference type="PDB" id="4V79">
    <property type="method" value="EM"/>
    <property type="resolution" value="15.00 A"/>
    <property type="chains" value="BL=1-144"/>
</dbReference>
<dbReference type="PDB" id="4V7A">
    <property type="method" value="EM"/>
    <property type="resolution" value="9.00 A"/>
    <property type="chains" value="BL=1-144"/>
</dbReference>
<dbReference type="PDB" id="4V7B">
    <property type="method" value="EM"/>
    <property type="resolution" value="6.80 A"/>
    <property type="chains" value="BL=1-144"/>
</dbReference>
<dbReference type="PDB" id="4V7C">
    <property type="method" value="EM"/>
    <property type="resolution" value="7.60 A"/>
    <property type="chains" value="BN=1-144"/>
</dbReference>
<dbReference type="PDB" id="4V7D">
    <property type="method" value="EM"/>
    <property type="resolution" value="7.60 A"/>
    <property type="chains" value="AO=1-144"/>
</dbReference>
<dbReference type="PDB" id="4V7I">
    <property type="method" value="EM"/>
    <property type="resolution" value="9.60 A"/>
    <property type="chains" value="AL=1-144"/>
</dbReference>
<dbReference type="PDB" id="4V7S">
    <property type="method" value="X-ray"/>
    <property type="resolution" value="3.25 A"/>
    <property type="chains" value="BL/DL=2-144"/>
</dbReference>
<dbReference type="PDB" id="4V7T">
    <property type="method" value="X-ray"/>
    <property type="resolution" value="3.19 A"/>
    <property type="chains" value="BL/DL=2-144"/>
</dbReference>
<dbReference type="PDB" id="4V7U">
    <property type="method" value="X-ray"/>
    <property type="resolution" value="3.10 A"/>
    <property type="chains" value="BL/DL=2-144"/>
</dbReference>
<dbReference type="PDB" id="4V7V">
    <property type="method" value="X-ray"/>
    <property type="resolution" value="3.29 A"/>
    <property type="chains" value="BL/DL=2-144"/>
</dbReference>
<dbReference type="PDB" id="4V85">
    <property type="method" value="X-ray"/>
    <property type="resolution" value="3.20 A"/>
    <property type="chains" value="BP=1-144"/>
</dbReference>
<dbReference type="PDB" id="4V89">
    <property type="method" value="X-ray"/>
    <property type="resolution" value="3.70 A"/>
    <property type="chains" value="BP=1-144"/>
</dbReference>
<dbReference type="PDB" id="4V9C">
    <property type="method" value="X-ray"/>
    <property type="resolution" value="3.30 A"/>
    <property type="chains" value="BL/DL=1-144"/>
</dbReference>
<dbReference type="PDB" id="4V9D">
    <property type="method" value="X-ray"/>
    <property type="resolution" value="3.00 A"/>
    <property type="chains" value="CL/DL=2-144"/>
</dbReference>
<dbReference type="PDB" id="4V9O">
    <property type="method" value="X-ray"/>
    <property type="resolution" value="2.90 A"/>
    <property type="chains" value="AL/CL/EL/GL=1-144"/>
</dbReference>
<dbReference type="PDB" id="4V9P">
    <property type="method" value="X-ray"/>
    <property type="resolution" value="2.90 A"/>
    <property type="chains" value="AL/CL/EL/GL=1-144"/>
</dbReference>
<dbReference type="PDB" id="4WF1">
    <property type="method" value="X-ray"/>
    <property type="resolution" value="3.09 A"/>
    <property type="chains" value="BL/DL=2-144"/>
</dbReference>
<dbReference type="PDB" id="4WOI">
    <property type="method" value="X-ray"/>
    <property type="resolution" value="3.00 A"/>
    <property type="chains" value="BL/CL=1-144"/>
</dbReference>
<dbReference type="PDB" id="4WWW">
    <property type="method" value="X-ray"/>
    <property type="resolution" value="3.10 A"/>
    <property type="chains" value="RL/YL=2-144"/>
</dbReference>
<dbReference type="PDB" id="4YBB">
    <property type="method" value="X-ray"/>
    <property type="resolution" value="2.10 A"/>
    <property type="chains" value="CM/DM=1-144"/>
</dbReference>
<dbReference type="PDB" id="5ADY">
    <property type="method" value="EM"/>
    <property type="resolution" value="4.50 A"/>
    <property type="chains" value="L=1-144"/>
</dbReference>
<dbReference type="PDB" id="5AFI">
    <property type="method" value="EM"/>
    <property type="resolution" value="2.90 A"/>
    <property type="chains" value="L=1-144"/>
</dbReference>
<dbReference type="PDB" id="5AKA">
    <property type="method" value="EM"/>
    <property type="resolution" value="5.70 A"/>
    <property type="chains" value="L=1-144"/>
</dbReference>
<dbReference type="PDB" id="5GAD">
    <property type="method" value="EM"/>
    <property type="resolution" value="3.70 A"/>
    <property type="chains" value="M=1-144"/>
</dbReference>
<dbReference type="PDB" id="5GAE">
    <property type="method" value="EM"/>
    <property type="resolution" value="3.33 A"/>
    <property type="chains" value="M=1-144"/>
</dbReference>
<dbReference type="PDB" id="5GAF">
    <property type="method" value="EM"/>
    <property type="resolution" value="4.30 A"/>
    <property type="chains" value="M=1-144"/>
</dbReference>
<dbReference type="PDB" id="5GAG">
    <property type="method" value="EM"/>
    <property type="resolution" value="3.80 A"/>
    <property type="chains" value="M=1-144"/>
</dbReference>
<dbReference type="PDB" id="5GAH">
    <property type="method" value="EM"/>
    <property type="resolution" value="3.80 A"/>
    <property type="chains" value="M=1-144"/>
</dbReference>
<dbReference type="PDB" id="5H5U">
    <property type="method" value="EM"/>
    <property type="resolution" value="3.00 A"/>
    <property type="chains" value="M=1-144"/>
</dbReference>
<dbReference type="PDB" id="5IQR">
    <property type="method" value="EM"/>
    <property type="resolution" value="3.00 A"/>
    <property type="chains" value="L=1-144"/>
</dbReference>
<dbReference type="PDB" id="5IT8">
    <property type="method" value="X-ray"/>
    <property type="resolution" value="3.12 A"/>
    <property type="chains" value="CM/DM=1-144"/>
</dbReference>
<dbReference type="PDB" id="5J5B">
    <property type="method" value="X-ray"/>
    <property type="resolution" value="2.80 A"/>
    <property type="chains" value="CM/DM=1-144"/>
</dbReference>
<dbReference type="PDB" id="5J7L">
    <property type="method" value="X-ray"/>
    <property type="resolution" value="3.00 A"/>
    <property type="chains" value="CM/DM=1-144"/>
</dbReference>
<dbReference type="PDB" id="5J88">
    <property type="method" value="X-ray"/>
    <property type="resolution" value="3.32 A"/>
    <property type="chains" value="CM/DM=1-144"/>
</dbReference>
<dbReference type="PDB" id="5J8A">
    <property type="method" value="X-ray"/>
    <property type="resolution" value="3.10 A"/>
    <property type="chains" value="CM/DM=1-144"/>
</dbReference>
<dbReference type="PDB" id="5J91">
    <property type="method" value="X-ray"/>
    <property type="resolution" value="2.96 A"/>
    <property type="chains" value="CM/DM=1-144"/>
</dbReference>
<dbReference type="PDB" id="5JC9">
    <property type="method" value="X-ray"/>
    <property type="resolution" value="3.03 A"/>
    <property type="chains" value="CM/DM=1-144"/>
</dbReference>
<dbReference type="PDB" id="5JTE">
    <property type="method" value="EM"/>
    <property type="resolution" value="3.60 A"/>
    <property type="chains" value="BL=1-144"/>
</dbReference>
<dbReference type="PDB" id="5JU8">
    <property type="method" value="EM"/>
    <property type="resolution" value="3.60 A"/>
    <property type="chains" value="BL=1-144"/>
</dbReference>
<dbReference type="PDB" id="5KCR">
    <property type="method" value="EM"/>
    <property type="resolution" value="3.60 A"/>
    <property type="chains" value="1P=1-144"/>
</dbReference>
<dbReference type="PDB" id="5KCS">
    <property type="method" value="EM"/>
    <property type="resolution" value="3.90 A"/>
    <property type="chains" value="1P=1-144"/>
</dbReference>
<dbReference type="PDB" id="5KPS">
    <property type="method" value="EM"/>
    <property type="resolution" value="3.90 A"/>
    <property type="chains" value="L=1-144"/>
</dbReference>
<dbReference type="PDB" id="5KPV">
    <property type="method" value="EM"/>
    <property type="resolution" value="4.10 A"/>
    <property type="chains" value="K=1-144"/>
</dbReference>
<dbReference type="PDB" id="5KPW">
    <property type="method" value="EM"/>
    <property type="resolution" value="3.90 A"/>
    <property type="chains" value="K=1-144"/>
</dbReference>
<dbReference type="PDB" id="5KPX">
    <property type="method" value="EM"/>
    <property type="resolution" value="3.90 A"/>
    <property type="chains" value="K=1-144"/>
</dbReference>
<dbReference type="PDB" id="5L3P">
    <property type="method" value="EM"/>
    <property type="resolution" value="3.70 A"/>
    <property type="chains" value="P=1-144"/>
</dbReference>
<dbReference type="PDB" id="5LZA">
    <property type="method" value="EM"/>
    <property type="resolution" value="3.60 A"/>
    <property type="chains" value="L=2-144"/>
</dbReference>
<dbReference type="PDB" id="5LZB">
    <property type="method" value="EM"/>
    <property type="resolution" value="5.30 A"/>
    <property type="chains" value="L=2-144"/>
</dbReference>
<dbReference type="PDB" id="5LZC">
    <property type="method" value="EM"/>
    <property type="resolution" value="4.80 A"/>
    <property type="chains" value="L=2-144"/>
</dbReference>
<dbReference type="PDB" id="5LZD">
    <property type="method" value="EM"/>
    <property type="resolution" value="3.40 A"/>
    <property type="chains" value="L=2-144"/>
</dbReference>
<dbReference type="PDB" id="5LZE">
    <property type="method" value="EM"/>
    <property type="resolution" value="3.50 A"/>
    <property type="chains" value="L=2-144"/>
</dbReference>
<dbReference type="PDB" id="5LZF">
    <property type="method" value="EM"/>
    <property type="resolution" value="4.60 A"/>
    <property type="chains" value="L=2-144"/>
</dbReference>
<dbReference type="PDB" id="5MDV">
    <property type="method" value="EM"/>
    <property type="resolution" value="2.97 A"/>
    <property type="chains" value="L=1-144"/>
</dbReference>
<dbReference type="PDB" id="5MDW">
    <property type="method" value="EM"/>
    <property type="resolution" value="3.06 A"/>
    <property type="chains" value="L=1-144"/>
</dbReference>
<dbReference type="PDB" id="5MDY">
    <property type="method" value="EM"/>
    <property type="resolution" value="3.35 A"/>
    <property type="chains" value="L=1-144"/>
</dbReference>
<dbReference type="PDB" id="5MDZ">
    <property type="method" value="EM"/>
    <property type="resolution" value="3.10 A"/>
    <property type="chains" value="L=1-144"/>
</dbReference>
<dbReference type="PDB" id="5MGP">
    <property type="method" value="EM"/>
    <property type="resolution" value="3.10 A"/>
    <property type="chains" value="L=2-144"/>
</dbReference>
<dbReference type="PDB" id="5NCO">
    <property type="method" value="EM"/>
    <property type="resolution" value="4.80 A"/>
    <property type="chains" value="M=1-144"/>
</dbReference>
<dbReference type="PDB" id="5NP6">
    <property type="method" value="EM"/>
    <property type="resolution" value="3.60 A"/>
    <property type="chains" value="j=2-144"/>
</dbReference>
<dbReference type="PDB" id="5NWY">
    <property type="method" value="EM"/>
    <property type="resolution" value="2.93 A"/>
    <property type="chains" value="Y=1-144"/>
</dbReference>
<dbReference type="PDB" id="5O2R">
    <property type="method" value="EM"/>
    <property type="resolution" value="3.40 A"/>
    <property type="chains" value="L=2-144"/>
</dbReference>
<dbReference type="PDB" id="5U4I">
    <property type="method" value="EM"/>
    <property type="resolution" value="3.50 A"/>
    <property type="chains" value="M=1-144"/>
</dbReference>
<dbReference type="PDB" id="5U9F">
    <property type="method" value="EM"/>
    <property type="resolution" value="3.20 A"/>
    <property type="chains" value="14=1-144"/>
</dbReference>
<dbReference type="PDB" id="5U9G">
    <property type="method" value="EM"/>
    <property type="resolution" value="3.20 A"/>
    <property type="chains" value="14=1-144"/>
</dbReference>
<dbReference type="PDB" id="5UYK">
    <property type="method" value="EM"/>
    <property type="resolution" value="3.90 A"/>
    <property type="chains" value="14=2-144"/>
</dbReference>
<dbReference type="PDB" id="5UYL">
    <property type="method" value="EM"/>
    <property type="resolution" value="3.60 A"/>
    <property type="chains" value="14=2-144"/>
</dbReference>
<dbReference type="PDB" id="5UYM">
    <property type="method" value="EM"/>
    <property type="resolution" value="3.20 A"/>
    <property type="chains" value="14=2-144"/>
</dbReference>
<dbReference type="PDB" id="5UYN">
    <property type="method" value="EM"/>
    <property type="resolution" value="4.00 A"/>
    <property type="chains" value="14=2-144"/>
</dbReference>
<dbReference type="PDB" id="5UYP">
    <property type="method" value="EM"/>
    <property type="resolution" value="3.90 A"/>
    <property type="chains" value="14=2-144"/>
</dbReference>
<dbReference type="PDB" id="5UYQ">
    <property type="method" value="EM"/>
    <property type="resolution" value="3.80 A"/>
    <property type="chains" value="14=2-144"/>
</dbReference>
<dbReference type="PDB" id="5WDT">
    <property type="method" value="EM"/>
    <property type="resolution" value="3.00 A"/>
    <property type="chains" value="L=1-143"/>
</dbReference>
<dbReference type="PDB" id="5WE4">
    <property type="method" value="EM"/>
    <property type="resolution" value="3.10 A"/>
    <property type="chains" value="L=1-143"/>
</dbReference>
<dbReference type="PDB" id="5WE6">
    <property type="method" value="EM"/>
    <property type="resolution" value="3.40 A"/>
    <property type="chains" value="L=2-143"/>
</dbReference>
<dbReference type="PDB" id="5WF0">
    <property type="method" value="EM"/>
    <property type="resolution" value="3.60 A"/>
    <property type="chains" value="L=1-143"/>
</dbReference>
<dbReference type="PDB" id="5WFK">
    <property type="method" value="EM"/>
    <property type="resolution" value="3.40 A"/>
    <property type="chains" value="L=1-143"/>
</dbReference>
<dbReference type="PDB" id="5WFS">
    <property type="method" value="EM"/>
    <property type="resolution" value="3.00 A"/>
    <property type="chains" value="L=1-143"/>
</dbReference>
<dbReference type="PDB" id="6BU8">
    <property type="method" value="EM"/>
    <property type="resolution" value="3.50 A"/>
    <property type="chains" value="14=2-144"/>
</dbReference>
<dbReference type="PDB" id="6BY1">
    <property type="method" value="X-ray"/>
    <property type="resolution" value="3.94 A"/>
    <property type="chains" value="CL/DL=2-144"/>
</dbReference>
<dbReference type="PDB" id="6C4I">
    <property type="method" value="EM"/>
    <property type="resolution" value="3.24 A"/>
    <property type="chains" value="M=1-144"/>
</dbReference>
<dbReference type="PDB" id="6DNC">
    <property type="method" value="EM"/>
    <property type="resolution" value="3.70 A"/>
    <property type="chains" value="P=1-144"/>
</dbReference>
<dbReference type="PDB" id="6ENF">
    <property type="method" value="EM"/>
    <property type="resolution" value="3.20 A"/>
    <property type="chains" value="L=2-144"/>
</dbReference>
<dbReference type="PDB" id="6ENJ">
    <property type="method" value="EM"/>
    <property type="resolution" value="3.70 A"/>
    <property type="chains" value="L=2-144"/>
</dbReference>
<dbReference type="PDB" id="6ENU">
    <property type="method" value="EM"/>
    <property type="resolution" value="3.10 A"/>
    <property type="chains" value="L=2-144"/>
</dbReference>
<dbReference type="PDB" id="6GBZ">
    <property type="method" value="EM"/>
    <property type="resolution" value="3.80 A"/>
    <property type="chains" value="L=2-144"/>
</dbReference>
<dbReference type="PDB" id="6GC0">
    <property type="method" value="EM"/>
    <property type="resolution" value="3.80 A"/>
    <property type="chains" value="L=2-144"/>
</dbReference>
<dbReference type="PDB" id="6GC4">
    <property type="method" value="EM"/>
    <property type="resolution" value="4.30 A"/>
    <property type="chains" value="L=2-144"/>
</dbReference>
<dbReference type="PDB" id="6GC6">
    <property type="method" value="EM"/>
    <property type="resolution" value="4.30 A"/>
    <property type="chains" value="L=2-144"/>
</dbReference>
<dbReference type="PDB" id="6GC7">
    <property type="method" value="EM"/>
    <property type="resolution" value="4.30 A"/>
    <property type="chains" value="L=2-144"/>
</dbReference>
<dbReference type="PDB" id="6GC8">
    <property type="method" value="EM"/>
    <property type="resolution" value="3.80 A"/>
    <property type="chains" value="L=2-144"/>
</dbReference>
<dbReference type="PDB" id="6GWT">
    <property type="method" value="EM"/>
    <property type="resolution" value="3.80 A"/>
    <property type="chains" value="L=2-144"/>
</dbReference>
<dbReference type="PDB" id="6GXM">
    <property type="method" value="EM"/>
    <property type="resolution" value="3.80 A"/>
    <property type="chains" value="L=2-144"/>
</dbReference>
<dbReference type="PDB" id="6GXN">
    <property type="method" value="EM"/>
    <property type="resolution" value="3.90 A"/>
    <property type="chains" value="L=2-144"/>
</dbReference>
<dbReference type="PDB" id="6GXO">
    <property type="method" value="EM"/>
    <property type="resolution" value="3.90 A"/>
    <property type="chains" value="L=2-144"/>
</dbReference>
<dbReference type="PDB" id="6GXP">
    <property type="method" value="EM"/>
    <property type="resolution" value="4.40 A"/>
    <property type="chains" value="L=2-144"/>
</dbReference>
<dbReference type="PDB" id="6H4N">
    <property type="method" value="EM"/>
    <property type="resolution" value="3.00 A"/>
    <property type="chains" value="L=2-144"/>
</dbReference>
<dbReference type="PDB" id="6H58">
    <property type="method" value="EM"/>
    <property type="resolution" value="7.90 A"/>
    <property type="chains" value="L/LL=2-144"/>
</dbReference>
<dbReference type="PDB" id="6HRM">
    <property type="method" value="EM"/>
    <property type="resolution" value="2.96 A"/>
    <property type="chains" value="L=1-144"/>
</dbReference>
<dbReference type="PDB" id="6I0Y">
    <property type="method" value="EM"/>
    <property type="resolution" value="3.20 A"/>
    <property type="chains" value="L=2-144"/>
</dbReference>
<dbReference type="PDB" id="6I7V">
    <property type="method" value="X-ray"/>
    <property type="resolution" value="2.90 A"/>
    <property type="chains" value="CM/DM=1-144"/>
</dbReference>
<dbReference type="PDB" id="6O9J">
    <property type="method" value="EM"/>
    <property type="resolution" value="3.90 A"/>
    <property type="chains" value="L=1-144"/>
</dbReference>
<dbReference type="PDB" id="6O9K">
    <property type="method" value="EM"/>
    <property type="resolution" value="4.00 A"/>
    <property type="chains" value="L=2-144"/>
</dbReference>
<dbReference type="PDB" id="6OFX">
    <property type="method" value="EM"/>
    <property type="resolution" value="3.30 A"/>
    <property type="chains" value="l=2-144"/>
</dbReference>
<dbReference type="PDB" id="6OG7">
    <property type="method" value="EM"/>
    <property type="resolution" value="3.30 A"/>
    <property type="chains" value="l=2-144"/>
</dbReference>
<dbReference type="PDB" id="6OGF">
    <property type="method" value="EM"/>
    <property type="resolution" value="3.90 A"/>
    <property type="chains" value="l=1-144"/>
</dbReference>
<dbReference type="PDB" id="6OGG">
    <property type="method" value="EM"/>
    <property type="resolution" value="4.20 A"/>
    <property type="chains" value="l=1-144"/>
</dbReference>
<dbReference type="PDB" id="6OGI">
    <property type="method" value="EM"/>
    <property type="resolution" value="3.40 A"/>
    <property type="chains" value="l=1-144"/>
</dbReference>
<dbReference type="PDB" id="6OM6">
    <property type="method" value="EM"/>
    <property type="resolution" value="3.10 A"/>
    <property type="chains" value="L=1-144"/>
</dbReference>
<dbReference type="PDB" id="6ORE">
    <property type="method" value="EM"/>
    <property type="resolution" value="2.90 A"/>
    <property type="chains" value="L=1-144"/>
</dbReference>
<dbReference type="PDB" id="6ORL">
    <property type="method" value="EM"/>
    <property type="resolution" value="3.50 A"/>
    <property type="chains" value="L=1-144"/>
</dbReference>
<dbReference type="PDB" id="6OSK">
    <property type="method" value="EM"/>
    <property type="resolution" value="3.60 A"/>
    <property type="chains" value="L=1-144"/>
</dbReference>
<dbReference type="PDB" id="6OSQ">
    <property type="method" value="EM"/>
    <property type="resolution" value="3.50 A"/>
    <property type="chains" value="L=1-144"/>
</dbReference>
<dbReference type="PDB" id="6OST">
    <property type="method" value="EM"/>
    <property type="resolution" value="4.20 A"/>
    <property type="chains" value="L=1-144"/>
</dbReference>
<dbReference type="PDB" id="6OT3">
    <property type="method" value="EM"/>
    <property type="resolution" value="3.90 A"/>
    <property type="chains" value="L=1-144"/>
</dbReference>
<dbReference type="PDB" id="6OUO">
    <property type="method" value="EM"/>
    <property type="resolution" value="3.70 A"/>
    <property type="chains" value="L=1-144"/>
</dbReference>
<dbReference type="PDB" id="6PC5">
    <property type="method" value="EM"/>
    <property type="resolution" value="2.70 A"/>
    <property type="chains" value="L=1-144"/>
</dbReference>
<dbReference type="PDB" id="6PC6">
    <property type="method" value="EM"/>
    <property type="resolution" value="2.50 A"/>
    <property type="chains" value="L=1-144"/>
</dbReference>
<dbReference type="PDB" id="6PC7">
    <property type="method" value="EM"/>
    <property type="resolution" value="2.50 A"/>
    <property type="chains" value="L=1-144"/>
</dbReference>
<dbReference type="PDB" id="6PC8">
    <property type="method" value="EM"/>
    <property type="resolution" value="2.90 A"/>
    <property type="chains" value="L=1-144"/>
</dbReference>
<dbReference type="PDB" id="6PCH">
    <property type="method" value="EM"/>
    <property type="resolution" value="2.90 A"/>
    <property type="chains" value="L=1-144"/>
</dbReference>
<dbReference type="PDB" id="6PCQ">
    <property type="method" value="EM"/>
    <property type="resolution" value="2.60 A"/>
    <property type="chains" value="L=1-144"/>
</dbReference>
<dbReference type="PDB" id="6PCR">
    <property type="method" value="EM"/>
    <property type="resolution" value="2.50 A"/>
    <property type="chains" value="L=1-144"/>
</dbReference>
<dbReference type="PDB" id="6PCS">
    <property type="method" value="EM"/>
    <property type="resolution" value="2.80 A"/>
    <property type="chains" value="L=1-144"/>
</dbReference>
<dbReference type="PDB" id="6PCT">
    <property type="method" value="EM"/>
    <property type="resolution" value="2.80 A"/>
    <property type="chains" value="L=1-144"/>
</dbReference>
<dbReference type="PDB" id="6PJ6">
    <property type="method" value="EM"/>
    <property type="resolution" value="2.20 A"/>
    <property type="chains" value="T=1-144"/>
</dbReference>
<dbReference type="PDB" id="6Q97">
    <property type="method" value="EM"/>
    <property type="resolution" value="3.90 A"/>
    <property type="chains" value="L=1-144"/>
</dbReference>
<dbReference type="PDB" id="6Q98">
    <property type="method" value="EM"/>
    <property type="resolution" value="4.30 A"/>
    <property type="chains" value="L=1-144"/>
</dbReference>
<dbReference type="PDB" id="6Q9A">
    <property type="method" value="EM"/>
    <property type="resolution" value="3.70 A"/>
    <property type="chains" value="L=1-143"/>
</dbReference>
<dbReference type="PDB" id="6QDW">
    <property type="method" value="EM"/>
    <property type="resolution" value="2.83 A"/>
    <property type="chains" value="l=1-144"/>
</dbReference>
<dbReference type="PDB" id="6QUL">
    <property type="method" value="EM"/>
    <property type="resolution" value="3.00 A"/>
    <property type="chains" value="M=1-144"/>
</dbReference>
<dbReference type="PDB" id="6S0K">
    <property type="method" value="EM"/>
    <property type="resolution" value="3.10 A"/>
    <property type="chains" value="M=1-144"/>
</dbReference>
<dbReference type="PDB" id="6SZS">
    <property type="method" value="EM"/>
    <property type="resolution" value="3.06 A"/>
    <property type="chains" value="L=1-144"/>
</dbReference>
<dbReference type="PDB" id="6TBV">
    <property type="method" value="EM"/>
    <property type="resolution" value="2.70 A"/>
    <property type="chains" value="L151=1-144"/>
</dbReference>
<dbReference type="PDB" id="6TC3">
    <property type="method" value="EM"/>
    <property type="resolution" value="2.70 A"/>
    <property type="chains" value="L151=1-144"/>
</dbReference>
<dbReference type="PDB" id="6U48">
    <property type="method" value="EM"/>
    <property type="resolution" value="2.87 A"/>
    <property type="chains" value="CM=1-144"/>
</dbReference>
<dbReference type="PDB" id="6VU3">
    <property type="method" value="EM"/>
    <property type="resolution" value="3.70 A"/>
    <property type="chains" value="u=1-144"/>
</dbReference>
<dbReference type="PDB" id="6VWL">
    <property type="method" value="EM"/>
    <property type="resolution" value="3.10 A"/>
    <property type="chains" value="J=1-144"/>
</dbReference>
<dbReference type="PDB" id="6VWM">
    <property type="method" value="EM"/>
    <property type="resolution" value="3.40 A"/>
    <property type="chains" value="J=1-144"/>
</dbReference>
<dbReference type="PDB" id="6VWN">
    <property type="method" value="EM"/>
    <property type="resolution" value="3.40 A"/>
    <property type="chains" value="J=1-144"/>
</dbReference>
<dbReference type="PDB" id="6VYQ">
    <property type="method" value="EM"/>
    <property type="resolution" value="3.70 A"/>
    <property type="chains" value="u=1-144"/>
</dbReference>
<dbReference type="PDB" id="6VYR">
    <property type="method" value="EM"/>
    <property type="resolution" value="3.80 A"/>
    <property type="chains" value="u=1-144"/>
</dbReference>
<dbReference type="PDB" id="6VYS">
    <property type="method" value="EM"/>
    <property type="resolution" value="3.70 A"/>
    <property type="chains" value="u=1-144"/>
</dbReference>
<dbReference type="PDB" id="6VYT">
    <property type="method" value="EM"/>
    <property type="resolution" value="14.00 A"/>
    <property type="chains" value="u=1-144"/>
</dbReference>
<dbReference type="PDB" id="6VYU">
    <property type="method" value="EM"/>
    <property type="resolution" value="7.00 A"/>
    <property type="chains" value="u=1-144"/>
</dbReference>
<dbReference type="PDB" id="6VYW">
    <property type="method" value="EM"/>
    <property type="resolution" value="7.00 A"/>
    <property type="chains" value="u=1-144"/>
</dbReference>
<dbReference type="PDB" id="6VYX">
    <property type="method" value="EM"/>
    <property type="resolution" value="9.90 A"/>
    <property type="chains" value="u=1-144"/>
</dbReference>
<dbReference type="PDB" id="6VYY">
    <property type="method" value="EM"/>
    <property type="resolution" value="9.90 A"/>
    <property type="chains" value="u=1-144"/>
</dbReference>
<dbReference type="PDB" id="6VYZ">
    <property type="method" value="EM"/>
    <property type="resolution" value="9.90 A"/>
    <property type="chains" value="u=1-144"/>
</dbReference>
<dbReference type="PDB" id="6VZ2">
    <property type="method" value="EM"/>
    <property type="resolution" value="10.00 A"/>
    <property type="chains" value="u=1-144"/>
</dbReference>
<dbReference type="PDB" id="6VZ3">
    <property type="method" value="EM"/>
    <property type="resolution" value="8.90 A"/>
    <property type="chains" value="u=1-144"/>
</dbReference>
<dbReference type="PDB" id="6VZ5">
    <property type="method" value="EM"/>
    <property type="resolution" value="8.90 A"/>
    <property type="chains" value="u=1-144"/>
</dbReference>
<dbReference type="PDB" id="6VZ7">
    <property type="method" value="EM"/>
    <property type="resolution" value="7.00 A"/>
    <property type="chains" value="u=1-144"/>
</dbReference>
<dbReference type="PDB" id="6VZJ">
    <property type="method" value="EM"/>
    <property type="resolution" value="4.10 A"/>
    <property type="chains" value="u=1-144"/>
</dbReference>
<dbReference type="PDB" id="6WD0">
    <property type="method" value="EM"/>
    <property type="resolution" value="3.00 A"/>
    <property type="chains" value="l=2-144"/>
</dbReference>
<dbReference type="PDB" id="6WD1">
    <property type="method" value="EM"/>
    <property type="resolution" value="3.30 A"/>
    <property type="chains" value="l=2-144"/>
</dbReference>
<dbReference type="PDB" id="6WD2">
    <property type="method" value="EM"/>
    <property type="resolution" value="3.60 A"/>
    <property type="chains" value="l=2-144"/>
</dbReference>
<dbReference type="PDB" id="6WD3">
    <property type="method" value="EM"/>
    <property type="resolution" value="3.60 A"/>
    <property type="chains" value="l=2-144"/>
</dbReference>
<dbReference type="PDB" id="6WD4">
    <property type="method" value="EM"/>
    <property type="resolution" value="3.70 A"/>
    <property type="chains" value="l=2-144"/>
</dbReference>
<dbReference type="PDB" id="6WD5">
    <property type="method" value="EM"/>
    <property type="resolution" value="3.60 A"/>
    <property type="chains" value="l=2-144"/>
</dbReference>
<dbReference type="PDB" id="6WD6">
    <property type="method" value="EM"/>
    <property type="resolution" value="3.70 A"/>
    <property type="chains" value="l=2-144"/>
</dbReference>
<dbReference type="PDB" id="6WD7">
    <property type="method" value="EM"/>
    <property type="resolution" value="3.90 A"/>
    <property type="chains" value="l=2-144"/>
</dbReference>
<dbReference type="PDB" id="6WD8">
    <property type="method" value="EM"/>
    <property type="resolution" value="3.70 A"/>
    <property type="chains" value="l=2-144"/>
</dbReference>
<dbReference type="PDB" id="6WD9">
    <property type="method" value="EM"/>
    <property type="resolution" value="3.70 A"/>
    <property type="chains" value="l=2-144"/>
</dbReference>
<dbReference type="PDB" id="6WDA">
    <property type="method" value="EM"/>
    <property type="resolution" value="3.80 A"/>
    <property type="chains" value="l=2-144"/>
</dbReference>
<dbReference type="PDB" id="6WDB">
    <property type="method" value="EM"/>
    <property type="resolution" value="4.00 A"/>
    <property type="chains" value="l=2-144"/>
</dbReference>
<dbReference type="PDB" id="6WDC">
    <property type="method" value="EM"/>
    <property type="resolution" value="4.20 A"/>
    <property type="chains" value="l=2-144"/>
</dbReference>
<dbReference type="PDB" id="6WDD">
    <property type="method" value="EM"/>
    <property type="resolution" value="3.20 A"/>
    <property type="chains" value="l=2-144"/>
</dbReference>
<dbReference type="PDB" id="6WDE">
    <property type="method" value="EM"/>
    <property type="resolution" value="3.00 A"/>
    <property type="chains" value="l=2-144"/>
</dbReference>
<dbReference type="PDB" id="6WDF">
    <property type="method" value="EM"/>
    <property type="resolution" value="3.30 A"/>
    <property type="chains" value="l=2-144"/>
</dbReference>
<dbReference type="PDB" id="6WDG">
    <property type="method" value="EM"/>
    <property type="resolution" value="3.30 A"/>
    <property type="chains" value="l=2-144"/>
</dbReference>
<dbReference type="PDB" id="6WDH">
    <property type="method" value="EM"/>
    <property type="resolution" value="4.30 A"/>
    <property type="chains" value="l=2-144"/>
</dbReference>
<dbReference type="PDB" id="6WDI">
    <property type="method" value="EM"/>
    <property type="resolution" value="4.00 A"/>
    <property type="chains" value="l=2-144"/>
</dbReference>
<dbReference type="PDB" id="6WDJ">
    <property type="method" value="EM"/>
    <property type="resolution" value="3.70 A"/>
    <property type="chains" value="l=2-144"/>
</dbReference>
<dbReference type="PDB" id="6WDK">
    <property type="method" value="EM"/>
    <property type="resolution" value="3.60 A"/>
    <property type="chains" value="l=2-144"/>
</dbReference>
<dbReference type="PDB" id="6WDL">
    <property type="method" value="EM"/>
    <property type="resolution" value="3.70 A"/>
    <property type="chains" value="l=2-144"/>
</dbReference>
<dbReference type="PDB" id="6WDM">
    <property type="method" value="EM"/>
    <property type="resolution" value="3.60 A"/>
    <property type="chains" value="l=2-144"/>
</dbReference>
<dbReference type="PDB" id="6WNT">
    <property type="method" value="EM"/>
    <property type="resolution" value="3.10 A"/>
    <property type="chains" value="l=2-144"/>
</dbReference>
<dbReference type="PDB" id="6WNV">
    <property type="method" value="EM"/>
    <property type="resolution" value="3.50 A"/>
    <property type="chains" value="l=2-144"/>
</dbReference>
<dbReference type="PDB" id="6WNW">
    <property type="method" value="EM"/>
    <property type="resolution" value="3.20 A"/>
    <property type="chains" value="l=2-144"/>
</dbReference>
<dbReference type="PDB" id="6WYV">
    <property type="method" value="EM"/>
    <property type="resolution" value="2.75 A"/>
    <property type="chains" value="L=1-144"/>
</dbReference>
<dbReference type="PDB" id="6X6T">
    <property type="method" value="EM"/>
    <property type="resolution" value="3.20 A"/>
    <property type="chains" value="u=1-144"/>
</dbReference>
<dbReference type="PDB" id="6X7F">
    <property type="method" value="EM"/>
    <property type="resolution" value="3.50 A"/>
    <property type="chains" value="u=1-144"/>
</dbReference>
<dbReference type="PDB" id="6X7K">
    <property type="method" value="EM"/>
    <property type="resolution" value="3.10 A"/>
    <property type="chains" value="u=1-144"/>
</dbReference>
<dbReference type="PDB" id="6X9Q">
    <property type="method" value="EM"/>
    <property type="resolution" value="4.80 A"/>
    <property type="chains" value="u=1-144"/>
</dbReference>
<dbReference type="PDB" id="6XDQ">
    <property type="method" value="EM"/>
    <property type="resolution" value="3.70 A"/>
    <property type="chains" value="u=1-144"/>
</dbReference>
<dbReference type="PDB" id="6XDR">
    <property type="method" value="EM"/>
    <property type="resolution" value="4.70 A"/>
    <property type="chains" value="u=1-144"/>
</dbReference>
<dbReference type="PDB" id="6XGF">
    <property type="method" value="EM"/>
    <property type="resolution" value="5.00 A"/>
    <property type="chains" value="u=1-144"/>
</dbReference>
<dbReference type="PDB" id="6XII">
    <property type="method" value="EM"/>
    <property type="resolution" value="7.00 A"/>
    <property type="chains" value="u=1-144"/>
</dbReference>
<dbReference type="PDB" id="6XIJ">
    <property type="method" value="EM"/>
    <property type="resolution" value="8.00 A"/>
    <property type="chains" value="u=1-144"/>
</dbReference>
<dbReference type="PDB" id="6XZ7">
    <property type="method" value="EM"/>
    <property type="resolution" value="2.10 A"/>
    <property type="chains" value="L=1-144"/>
</dbReference>
<dbReference type="PDB" id="6XZA">
    <property type="method" value="EM"/>
    <property type="resolution" value="2.66 A"/>
    <property type="chains" value="L2=1-144"/>
</dbReference>
<dbReference type="PDB" id="6XZB">
    <property type="method" value="EM"/>
    <property type="resolution" value="2.54 A"/>
    <property type="chains" value="L2=1-144"/>
</dbReference>
<dbReference type="PDB" id="6Y69">
    <property type="method" value="EM"/>
    <property type="resolution" value="2.86 A"/>
    <property type="chains" value="L=2-144"/>
</dbReference>
<dbReference type="PDB" id="6YS3">
    <property type="method" value="EM"/>
    <property type="resolution" value="2.58 A"/>
    <property type="chains" value="l=1-144"/>
</dbReference>
<dbReference type="PDB" id="6YSR">
    <property type="method" value="EM"/>
    <property type="resolution" value="3.10 A"/>
    <property type="chains" value="L=1-144"/>
</dbReference>
<dbReference type="PDB" id="6YSS">
    <property type="method" value="EM"/>
    <property type="resolution" value="2.60 A"/>
    <property type="chains" value="L=1-144"/>
</dbReference>
<dbReference type="PDB" id="6YST">
    <property type="method" value="EM"/>
    <property type="resolution" value="3.20 A"/>
    <property type="chains" value="L=1-144"/>
</dbReference>
<dbReference type="PDB" id="6YSU">
    <property type="method" value="EM"/>
    <property type="resolution" value="3.70 A"/>
    <property type="chains" value="L=1-144"/>
</dbReference>
<dbReference type="PDB" id="6ZTJ">
    <property type="method" value="EM"/>
    <property type="resolution" value="3.40 A"/>
    <property type="chains" value="BM=1-144"/>
</dbReference>
<dbReference type="PDB" id="6ZTL">
    <property type="method" value="EM"/>
    <property type="resolution" value="3.50 A"/>
    <property type="chains" value="BM=1-144"/>
</dbReference>
<dbReference type="PDB" id="6ZTM">
    <property type="method" value="EM"/>
    <property type="resolution" value="3.30 A"/>
    <property type="chains" value="BM=1-144"/>
</dbReference>
<dbReference type="PDB" id="6ZTN">
    <property type="method" value="EM"/>
    <property type="resolution" value="3.90 A"/>
    <property type="chains" value="BM=1-144"/>
</dbReference>
<dbReference type="PDB" id="6ZTO">
    <property type="method" value="EM"/>
    <property type="resolution" value="3.00 A"/>
    <property type="chains" value="BM=1-144"/>
</dbReference>
<dbReference type="PDB" id="6ZTP">
    <property type="method" value="EM"/>
    <property type="resolution" value="3.00 A"/>
    <property type="chains" value="BM=1-144"/>
</dbReference>
<dbReference type="PDB" id="6ZU1">
    <property type="method" value="EM"/>
    <property type="resolution" value="3.00 A"/>
    <property type="chains" value="BM=1-144"/>
</dbReference>
<dbReference type="PDB" id="7ABZ">
    <property type="method" value="EM"/>
    <property type="resolution" value="3.21 A"/>
    <property type="chains" value="L=1-144"/>
</dbReference>
<dbReference type="PDB" id="7AC7">
    <property type="method" value="EM"/>
    <property type="resolution" value="3.08 A"/>
    <property type="chains" value="L=1-144"/>
</dbReference>
<dbReference type="PDB" id="7ACJ">
    <property type="method" value="EM"/>
    <property type="resolution" value="3.20 A"/>
    <property type="chains" value="L=1-144"/>
</dbReference>
<dbReference type="PDB" id="7ACR">
    <property type="method" value="EM"/>
    <property type="resolution" value="3.44 A"/>
    <property type="chains" value="L=1-144"/>
</dbReference>
<dbReference type="PDB" id="7B5K">
    <property type="method" value="EM"/>
    <property type="resolution" value="2.90 A"/>
    <property type="chains" value="L=1-144"/>
</dbReference>
<dbReference type="PDB" id="7BL2">
    <property type="method" value="EM"/>
    <property type="resolution" value="3.70 A"/>
    <property type="chains" value="L=1-144"/>
</dbReference>
<dbReference type="PDB" id="7BL3">
    <property type="method" value="EM"/>
    <property type="resolution" value="3.50 A"/>
    <property type="chains" value="L=1-144"/>
</dbReference>
<dbReference type="PDB" id="7BL4">
    <property type="method" value="EM"/>
    <property type="resolution" value="2.40 A"/>
    <property type="chains" value="L=1-144"/>
</dbReference>
<dbReference type="PDB" id="7BL5">
    <property type="method" value="EM"/>
    <property type="resolution" value="3.30 A"/>
    <property type="chains" value="L=1-144"/>
</dbReference>
<dbReference type="PDB" id="7BL6">
    <property type="method" value="EM"/>
    <property type="resolution" value="4.00 A"/>
    <property type="chains" value="L=1-144"/>
</dbReference>
<dbReference type="PDB" id="7BV8">
    <property type="method" value="EM"/>
    <property type="resolution" value="3.14 A"/>
    <property type="chains" value="M=1-144"/>
</dbReference>
<dbReference type="PDB" id="7D6Z">
    <property type="method" value="EM"/>
    <property type="resolution" value="3.40 A"/>
    <property type="chains" value="L=1-144"/>
</dbReference>
<dbReference type="PDB" id="7D80">
    <property type="method" value="EM"/>
    <property type="resolution" value="4.10 A"/>
    <property type="chains" value="k=1-144"/>
</dbReference>
<dbReference type="PDB" id="7JSS">
    <property type="method" value="EM"/>
    <property type="resolution" value="3.70 A"/>
    <property type="chains" value="l=2-144"/>
</dbReference>
<dbReference type="PDB" id="7JSW">
    <property type="method" value="EM"/>
    <property type="resolution" value="3.80 A"/>
    <property type="chains" value="l=2-144"/>
</dbReference>
<dbReference type="PDB" id="7JSZ">
    <property type="method" value="EM"/>
    <property type="resolution" value="3.70 A"/>
    <property type="chains" value="l=2-144"/>
</dbReference>
<dbReference type="PDB" id="7JT1">
    <property type="method" value="EM"/>
    <property type="resolution" value="3.30 A"/>
    <property type="chains" value="l=2-144"/>
</dbReference>
<dbReference type="PDB" id="7JT2">
    <property type="method" value="EM"/>
    <property type="resolution" value="3.50 A"/>
    <property type="chains" value="l=2-144"/>
</dbReference>
<dbReference type="PDB" id="7JT3">
    <property type="method" value="EM"/>
    <property type="resolution" value="3.70 A"/>
    <property type="chains" value="l=2-144"/>
</dbReference>
<dbReference type="PDB" id="7K00">
    <property type="method" value="EM"/>
    <property type="resolution" value="1.98 A"/>
    <property type="chains" value="k=1-144"/>
</dbReference>
<dbReference type="PDB" id="7K50">
    <property type="method" value="EM"/>
    <property type="resolution" value="3.40 A"/>
    <property type="chains" value="l=2-144"/>
</dbReference>
<dbReference type="PDB" id="7K51">
    <property type="method" value="EM"/>
    <property type="resolution" value="3.50 A"/>
    <property type="chains" value="l=2-144"/>
</dbReference>
<dbReference type="PDB" id="7K52">
    <property type="method" value="EM"/>
    <property type="resolution" value="3.40 A"/>
    <property type="chains" value="l=2-144"/>
</dbReference>
<dbReference type="PDB" id="7K53">
    <property type="method" value="EM"/>
    <property type="resolution" value="3.20 A"/>
    <property type="chains" value="l=2-144"/>
</dbReference>
<dbReference type="PDB" id="7K54">
    <property type="method" value="EM"/>
    <property type="resolution" value="3.20 A"/>
    <property type="chains" value="l=2-144"/>
</dbReference>
<dbReference type="PDB" id="7K55">
    <property type="method" value="EM"/>
    <property type="resolution" value="3.30 A"/>
    <property type="chains" value="l=2-144"/>
</dbReference>
<dbReference type="PDB" id="7LV0">
    <property type="method" value="EM"/>
    <property type="resolution" value="3.20 A"/>
    <property type="chains" value="l=2-144"/>
</dbReference>
<dbReference type="PDB" id="7LVK">
    <property type="method" value="EM"/>
    <property type="resolution" value="2.20 A"/>
    <property type="chains" value="T=1-144"/>
</dbReference>
<dbReference type="PDB" id="7M5D">
    <property type="method" value="EM"/>
    <property type="resolution" value="2.80 A"/>
    <property type="chains" value="L=1-144"/>
</dbReference>
<dbReference type="PDB" id="7N1P">
    <property type="method" value="EM"/>
    <property type="resolution" value="2.33 A"/>
    <property type="chains" value="LO=1-144"/>
</dbReference>
<dbReference type="PDB" id="7N2C">
    <property type="method" value="EM"/>
    <property type="resolution" value="2.72 A"/>
    <property type="chains" value="LO=1-144"/>
</dbReference>
<dbReference type="PDB" id="7N2U">
    <property type="method" value="EM"/>
    <property type="resolution" value="2.53 A"/>
    <property type="chains" value="LO=1-144"/>
</dbReference>
<dbReference type="PDB" id="7N2V">
    <property type="method" value="EM"/>
    <property type="resolution" value="2.54 A"/>
    <property type="chains" value="LO=1-144"/>
</dbReference>
<dbReference type="PDB" id="7N30">
    <property type="method" value="EM"/>
    <property type="resolution" value="2.66 A"/>
    <property type="chains" value="LO=1-144"/>
</dbReference>
<dbReference type="PDB" id="7N31">
    <property type="method" value="EM"/>
    <property type="resolution" value="2.69 A"/>
    <property type="chains" value="LO=1-144"/>
</dbReference>
<dbReference type="PDB" id="7NBU">
    <property type="method" value="EM"/>
    <property type="resolution" value="3.11 A"/>
    <property type="chains" value="k=1-144"/>
</dbReference>
<dbReference type="PDB" id="7NSO">
    <property type="method" value="EM"/>
    <property type="resolution" value="2.90 A"/>
    <property type="chains" value="L=1-144"/>
</dbReference>
<dbReference type="PDB" id="7NSP">
    <property type="method" value="EM"/>
    <property type="resolution" value="3.50 A"/>
    <property type="chains" value="L=1-144"/>
</dbReference>
<dbReference type="PDB" id="7NSQ">
    <property type="method" value="EM"/>
    <property type="resolution" value="3.10 A"/>
    <property type="chains" value="L=1-144"/>
</dbReference>
<dbReference type="PDB" id="7NWT">
    <property type="method" value="EM"/>
    <property type="resolution" value="2.66 A"/>
    <property type="chains" value="L=1-144"/>
</dbReference>
<dbReference type="PDB" id="7NWW">
    <property type="method" value="EM"/>
    <property type="resolution" value="3.05 A"/>
    <property type="chains" value="K=1-144"/>
</dbReference>
<dbReference type="PDB" id="7O19">
    <property type="method" value="EM"/>
    <property type="resolution" value="2.90 A"/>
    <property type="chains" value="BL=1-144"/>
</dbReference>
<dbReference type="PDB" id="7O1A">
    <property type="method" value="EM"/>
    <property type="resolution" value="2.40 A"/>
    <property type="chains" value="BL=1-144"/>
</dbReference>
<dbReference type="PDB" id="7O1C">
    <property type="method" value="EM"/>
    <property type="resolution" value="2.60 A"/>
    <property type="chains" value="BL=1-144"/>
</dbReference>
<dbReference type="PDB" id="7OIF">
    <property type="method" value="EM"/>
    <property type="resolution" value="3.00 A"/>
    <property type="chains" value="K=1-144"/>
</dbReference>
<dbReference type="PDB" id="7OIG">
    <property type="method" value="EM"/>
    <property type="resolution" value="3.20 A"/>
    <property type="chains" value="K=1-144"/>
</dbReference>
<dbReference type="PDB" id="7OII">
    <property type="method" value="EM"/>
    <property type="resolution" value="3.00 A"/>
    <property type="chains" value="K=1-144"/>
</dbReference>
<dbReference type="PDB" id="7OIZ">
    <property type="method" value="EM"/>
    <property type="resolution" value="2.90 A"/>
    <property type="chains" value="k=1-144"/>
</dbReference>
<dbReference type="PDB" id="7OJ0">
    <property type="method" value="EM"/>
    <property type="resolution" value="3.50 A"/>
    <property type="chains" value="k=1-144"/>
</dbReference>
<dbReference type="PDB" id="7OT5">
    <property type="method" value="EM"/>
    <property type="resolution" value="2.90 A"/>
    <property type="chains" value="K=1-144"/>
</dbReference>
<dbReference type="PDB" id="7P3K">
    <property type="method" value="EM"/>
    <property type="resolution" value="2.90 A"/>
    <property type="chains" value="k=1-144"/>
</dbReference>
<dbReference type="PDB" id="7PJS">
    <property type="method" value="EM"/>
    <property type="resolution" value="2.35 A"/>
    <property type="chains" value="L=1-144"/>
</dbReference>
<dbReference type="PDB" id="7PJT">
    <property type="method" value="EM"/>
    <property type="resolution" value="6.00 A"/>
    <property type="chains" value="L=1-144"/>
</dbReference>
<dbReference type="PDB" id="7PJV">
    <property type="method" value="EM"/>
    <property type="resolution" value="3.10 A"/>
    <property type="chains" value="L=1-144"/>
</dbReference>
<dbReference type="PDB" id="7PJW">
    <property type="method" value="EM"/>
    <property type="resolution" value="4.00 A"/>
    <property type="chains" value="L=1-144"/>
</dbReference>
<dbReference type="PDB" id="7PJX">
    <property type="method" value="EM"/>
    <property type="resolution" value="6.50 A"/>
    <property type="chains" value="L=1-144"/>
</dbReference>
<dbReference type="PDB" id="7PJY">
    <property type="method" value="EM"/>
    <property type="resolution" value="3.10 A"/>
    <property type="chains" value="L=1-144"/>
</dbReference>
<dbReference type="PDB" id="7PJZ">
    <property type="method" value="EM"/>
    <property type="resolution" value="6.00 A"/>
    <property type="chains" value="L=1-144"/>
</dbReference>
<dbReference type="PDB" id="7Q4K">
    <property type="method" value="EM"/>
    <property type="resolution" value="3.00 A"/>
    <property type="chains" value="BL=1-144"/>
</dbReference>
<dbReference type="PDB" id="7QG8">
    <property type="method" value="EM"/>
    <property type="resolution" value="3.97 A"/>
    <property type="chains" value="Y=1-144"/>
</dbReference>
<dbReference type="PDB" id="7QGH">
    <property type="method" value="EM"/>
    <property type="resolution" value="4.48 A"/>
    <property type="chains" value="Y=1-144"/>
</dbReference>
<dbReference type="PDB" id="7QGN">
    <property type="method" value="EM"/>
    <property type="resolution" value="3.37 A"/>
    <property type="chains" value="Y=1-144"/>
</dbReference>
<dbReference type="PDB" id="7QGR">
    <property type="method" value="EM"/>
    <property type="resolution" value="5.70 A"/>
    <property type="chains" value="Y=1-144"/>
</dbReference>
<dbReference type="PDB" id="7QQ3">
    <property type="method" value="EM"/>
    <property type="resolution" value="2.10 A"/>
    <property type="chains" value="T=1-143"/>
</dbReference>
<dbReference type="PDB" id="7S1G">
    <property type="method" value="EM"/>
    <property type="resolution" value="2.48 A"/>
    <property type="chains" value="T=1-144"/>
</dbReference>
<dbReference type="PDB" id="7S1H">
    <property type="method" value="EM"/>
    <property type="resolution" value="2.35 A"/>
    <property type="chains" value="T=1-144"/>
</dbReference>
<dbReference type="PDB" id="7S1I">
    <property type="method" value="EM"/>
    <property type="resolution" value="2.48 A"/>
    <property type="chains" value="T=1-144"/>
</dbReference>
<dbReference type="PDB" id="7S1J">
    <property type="method" value="EM"/>
    <property type="resolution" value="2.47 A"/>
    <property type="chains" value="T=1-144"/>
</dbReference>
<dbReference type="PDB" id="7S1K">
    <property type="method" value="EM"/>
    <property type="resolution" value="2.42 A"/>
    <property type="chains" value="T=1-144"/>
</dbReference>
<dbReference type="PDB" id="7SA4">
    <property type="method" value="EM"/>
    <property type="resolution" value="2.55 A"/>
    <property type="chains" value="L=1-144"/>
</dbReference>
<dbReference type="PDB" id="7SS9">
    <property type="method" value="EM"/>
    <property type="resolution" value="3.90 A"/>
    <property type="chains" value="l=2-144"/>
</dbReference>
<dbReference type="PDB" id="7SSD">
    <property type="method" value="EM"/>
    <property type="resolution" value="3.30 A"/>
    <property type="chains" value="l=2-144"/>
</dbReference>
<dbReference type="PDB" id="7SSL">
    <property type="method" value="EM"/>
    <property type="resolution" value="3.80 A"/>
    <property type="chains" value="l=2-144"/>
</dbReference>
<dbReference type="PDB" id="7SSN">
    <property type="method" value="EM"/>
    <property type="resolution" value="3.20 A"/>
    <property type="chains" value="l=2-144"/>
</dbReference>
<dbReference type="PDB" id="7SSO">
    <property type="method" value="EM"/>
    <property type="resolution" value="3.20 A"/>
    <property type="chains" value="l=2-144"/>
</dbReference>
<dbReference type="PDB" id="7SSW">
    <property type="method" value="EM"/>
    <property type="resolution" value="3.80 A"/>
    <property type="chains" value="l=2-144"/>
</dbReference>
<dbReference type="PDB" id="7ST2">
    <property type="method" value="EM"/>
    <property type="resolution" value="2.90 A"/>
    <property type="chains" value="l=2-144"/>
</dbReference>
<dbReference type="PDB" id="7ST6">
    <property type="method" value="EM"/>
    <property type="resolution" value="3.00 A"/>
    <property type="chains" value="l=2-144"/>
</dbReference>
<dbReference type="PDB" id="7ST7">
    <property type="method" value="EM"/>
    <property type="resolution" value="3.20 A"/>
    <property type="chains" value="l=2-144"/>
</dbReference>
<dbReference type="PDB" id="7TOS">
    <property type="method" value="EM"/>
    <property type="resolution" value="2.90 A"/>
    <property type="chains" value="L15=2-144"/>
</dbReference>
<dbReference type="PDB" id="7UG7">
    <property type="method" value="EM"/>
    <property type="resolution" value="2.58 A"/>
    <property type="chains" value="LO=1-144"/>
</dbReference>
<dbReference type="PDB" id="7UPH">
    <property type="method" value="EM"/>
    <property type="resolution" value="4.18 A"/>
    <property type="chains" value="T=1-144"/>
</dbReference>
<dbReference type="PDB" id="7Y7C">
    <property type="method" value="EM"/>
    <property type="resolution" value="2.51 A"/>
    <property type="chains" value="k=1-144"/>
</dbReference>
<dbReference type="PDB" id="7Y7D">
    <property type="method" value="EM"/>
    <property type="resolution" value="2.58 A"/>
    <property type="chains" value="k=1-144"/>
</dbReference>
<dbReference type="PDB" id="7Y7E">
    <property type="method" value="EM"/>
    <property type="resolution" value="2.41 A"/>
    <property type="chains" value="k=1-144"/>
</dbReference>
<dbReference type="PDB" id="7Y7F">
    <property type="method" value="EM"/>
    <property type="resolution" value="2.43 A"/>
    <property type="chains" value="k=1-144"/>
</dbReference>
<dbReference type="PDB" id="7Y7G">
    <property type="method" value="EM"/>
    <property type="resolution" value="2.34 A"/>
    <property type="chains" value="k=1-144"/>
</dbReference>
<dbReference type="PDB" id="7Y7H">
    <property type="method" value="EM"/>
    <property type="resolution" value="2.51 A"/>
    <property type="chains" value="k=1-144"/>
</dbReference>
<dbReference type="PDB" id="7YLA">
    <property type="method" value="EM"/>
    <property type="resolution" value="2.52 A"/>
    <property type="chains" value="T=1-144"/>
</dbReference>
<dbReference type="PDB" id="7Z20">
    <property type="method" value="EM"/>
    <property type="resolution" value="2.29 A"/>
    <property type="chains" value="l=1-144"/>
</dbReference>
<dbReference type="PDB" id="7ZOD">
    <property type="method" value="EM"/>
    <property type="resolution" value="2.56 A"/>
    <property type="chains" value="l=1-144"/>
</dbReference>
<dbReference type="PDB" id="7ZP8">
    <property type="method" value="EM"/>
    <property type="resolution" value="2.20 A"/>
    <property type="chains" value="l=1-144"/>
</dbReference>
<dbReference type="PDB" id="7ZQ5">
    <property type="method" value="EM"/>
    <property type="resolution" value="2.70 A"/>
    <property type="chains" value="l=1-144"/>
</dbReference>
<dbReference type="PDB" id="7ZQ6">
    <property type="method" value="EM"/>
    <property type="resolution" value="2.75 A"/>
    <property type="chains" value="l=1-144"/>
</dbReference>
<dbReference type="PDB" id="7ZTA">
    <property type="method" value="EM"/>
    <property type="resolution" value="2.70 A"/>
    <property type="chains" value="L151=1-144"/>
</dbReference>
<dbReference type="PDB" id="8A3L">
    <property type="method" value="EM"/>
    <property type="resolution" value="3.42 A"/>
    <property type="chains" value="k=1-144"/>
</dbReference>
<dbReference type="PDB" id="8AKN">
    <property type="method" value="EM"/>
    <property type="resolution" value="2.30 A"/>
    <property type="chains" value="k=1-144"/>
</dbReference>
<dbReference type="PDB" id="8AM9">
    <property type="method" value="EM"/>
    <property type="resolution" value="2.80 A"/>
    <property type="chains" value="k=1-144"/>
</dbReference>
<dbReference type="PDB" id="8ANA">
    <property type="method" value="EM"/>
    <property type="resolution" value="2.00 A"/>
    <property type="chains" value="k=1-144"/>
</dbReference>
<dbReference type="PDB" id="8AP4">
    <property type="method" value="EM"/>
    <property type="resolution" value="3.00 A"/>
    <property type="chains" value="k=1-144"/>
</dbReference>
<dbReference type="PDB" id="8AYE">
    <property type="method" value="EM"/>
    <property type="resolution" value="1.96 A"/>
    <property type="chains" value="k=1-144"/>
</dbReference>
<dbReference type="PDB" id="8B0X">
    <property type="method" value="EM"/>
    <property type="resolution" value="1.55 A"/>
    <property type="chains" value="k=1-144"/>
</dbReference>
<dbReference type="PDB" id="8B7Y">
    <property type="method" value="EM"/>
    <property type="resolution" value="3.00 A"/>
    <property type="chains" value="T=1-144"/>
</dbReference>
<dbReference type="PDB" id="8BF7">
    <property type="method" value="EM"/>
    <property type="resolution" value="2.33 A"/>
    <property type="chains" value="I=1-144"/>
</dbReference>
<dbReference type="PDB" id="8BGE">
    <property type="method" value="EM"/>
    <property type="resolution" value="2.11 A"/>
    <property type="chains" value="I=1-144"/>
</dbReference>
<dbReference type="PDB" id="8BGH">
    <property type="method" value="EM"/>
    <property type="resolution" value="2.88 A"/>
    <property type="chains" value="I=1-144"/>
</dbReference>
<dbReference type="PDB" id="8BH4">
    <property type="method" value="EM"/>
    <property type="resolution" value="2.62 A"/>
    <property type="chains" value="I=1-144"/>
</dbReference>
<dbReference type="PDB" id="8BHJ">
    <property type="method" value="EM"/>
    <property type="resolution" value="2.81 A"/>
    <property type="chains" value="I=1-144"/>
</dbReference>
<dbReference type="PDB" id="8BHL">
    <property type="method" value="EM"/>
    <property type="resolution" value="2.21 A"/>
    <property type="chains" value="I=1-144"/>
</dbReference>
<dbReference type="PDB" id="8BHN">
    <property type="method" value="EM"/>
    <property type="resolution" value="2.85 A"/>
    <property type="chains" value="I=1-144"/>
</dbReference>
<dbReference type="PDB" id="8BHP">
    <property type="method" value="EM"/>
    <property type="resolution" value="2.37 A"/>
    <property type="chains" value="I=1-144"/>
</dbReference>
<dbReference type="PDB" id="8BIL">
    <property type="method" value="EM"/>
    <property type="resolution" value="2.04 A"/>
    <property type="chains" value="I=1-144"/>
</dbReference>
<dbReference type="PDB" id="8BIM">
    <property type="method" value="EM"/>
    <property type="resolution" value="2.04 A"/>
    <property type="chains" value="I=1-144"/>
</dbReference>
<dbReference type="PDB" id="8C8X">
    <property type="method" value="EM"/>
    <property type="resolution" value="3.93 A"/>
    <property type="chains" value="L=1-144"/>
</dbReference>
<dbReference type="PDB" id="8C8Y">
    <property type="method" value="EM"/>
    <property type="resolution" value="3.03 A"/>
    <property type="chains" value="L=1-144"/>
</dbReference>
<dbReference type="PDB" id="8C8Z">
    <property type="method" value="EM"/>
    <property type="resolution" value="3.12 A"/>
    <property type="chains" value="L=1-144"/>
</dbReference>
<dbReference type="PDB" id="8C90">
    <property type="method" value="EM"/>
    <property type="resolution" value="3.15 A"/>
    <property type="chains" value="L=1-144"/>
</dbReference>
<dbReference type="PDB" id="8C91">
    <property type="method" value="EM"/>
    <property type="resolution" value="4.19 A"/>
    <property type="chains" value="L=1-144"/>
</dbReference>
<dbReference type="PDB" id="8C92">
    <property type="method" value="EM"/>
    <property type="resolution" value="3.79 A"/>
    <property type="chains" value="L=1-144"/>
</dbReference>
<dbReference type="PDB" id="8C93">
    <property type="method" value="EM"/>
    <property type="resolution" value="4.17 A"/>
    <property type="chains" value="L=1-144"/>
</dbReference>
<dbReference type="PDB" id="8C94">
    <property type="method" value="EM"/>
    <property type="resolution" value="3.80 A"/>
    <property type="chains" value="L=1-144"/>
</dbReference>
<dbReference type="PDB" id="8C95">
    <property type="method" value="EM"/>
    <property type="resolution" value="4.92 A"/>
    <property type="chains" value="L=1-144"/>
</dbReference>
<dbReference type="PDB" id="8C96">
    <property type="method" value="EM"/>
    <property type="resolution" value="4.43 A"/>
    <property type="chains" value="L=1-144"/>
</dbReference>
<dbReference type="PDB" id="8C98">
    <property type="method" value="EM"/>
    <property type="resolution" value="3.66 A"/>
    <property type="chains" value="L=1-144"/>
</dbReference>
<dbReference type="PDB" id="8C99">
    <property type="method" value="EM"/>
    <property type="resolution" value="3.29 A"/>
    <property type="chains" value="L=1-144"/>
</dbReference>
<dbReference type="PDB" id="8CAM">
    <property type="method" value="EM"/>
    <property type="resolution" value="1.86 A"/>
    <property type="chains" value="k=1-144"/>
</dbReference>
<dbReference type="PDB" id="8CEU">
    <property type="method" value="EM"/>
    <property type="resolution" value="1.83 A"/>
    <property type="chains" value="k=1-144"/>
</dbReference>
<dbReference type="PDB" id="8CGD">
    <property type="method" value="EM"/>
    <property type="resolution" value="1.98 A"/>
    <property type="chains" value="k=1-144"/>
</dbReference>
<dbReference type="PDB" id="8CGK">
    <property type="method" value="EM"/>
    <property type="resolution" value="1.64 A"/>
    <property type="chains" value="k=1-144"/>
</dbReference>
<dbReference type="PDB" id="8CGV">
    <property type="method" value="EM"/>
    <property type="resolution" value="1.66 A"/>
    <property type="chains" value="k=1-144"/>
</dbReference>
<dbReference type="PDB" id="8E30">
    <property type="method" value="EM"/>
    <property type="resolution" value="1.91 A"/>
    <property type="chains" value="L=1-144"/>
</dbReference>
<dbReference type="PDB" id="8E32">
    <property type="method" value="EM"/>
    <property type="resolution" value="2.35 A"/>
    <property type="chains" value="L=1-144"/>
</dbReference>
<dbReference type="PDB" id="8E33">
    <property type="method" value="EM"/>
    <property type="resolution" value="2.23 A"/>
    <property type="chains" value="L=1-144"/>
</dbReference>
<dbReference type="PDB" id="8E35">
    <property type="method" value="EM"/>
    <property type="resolution" value="2.27 A"/>
    <property type="chains" value="L=1-144"/>
</dbReference>
<dbReference type="PDB" id="8E36">
    <property type="method" value="EM"/>
    <property type="resolution" value="2.38 A"/>
    <property type="chains" value="L=1-144"/>
</dbReference>
<dbReference type="PDB" id="8E3L">
    <property type="method" value="EM"/>
    <property type="resolution" value="2.35 A"/>
    <property type="chains" value="L=1-144"/>
</dbReference>
<dbReference type="PDB" id="8E3M">
    <property type="method" value="EM"/>
    <property type="resolution" value="2.25 A"/>
    <property type="chains" value="L=1-144"/>
</dbReference>
<dbReference type="PDB" id="8E3O">
    <property type="method" value="EM"/>
    <property type="resolution" value="1.99 A"/>
    <property type="chains" value="L=1-144"/>
</dbReference>
<dbReference type="PDB" id="8E41">
    <property type="method" value="EM"/>
    <property type="resolution" value="2.13 A"/>
    <property type="chains" value="L=1-144"/>
</dbReference>
<dbReference type="PDB" id="8E42">
    <property type="method" value="EM"/>
    <property type="resolution" value="2.29 A"/>
    <property type="chains" value="L=1-144"/>
</dbReference>
<dbReference type="PDB" id="8E43">
    <property type="method" value="EM"/>
    <property type="resolution" value="2.09 A"/>
    <property type="chains" value="L=1-144"/>
</dbReference>
<dbReference type="PDB" id="8E44">
    <property type="method" value="EM"/>
    <property type="resolution" value="2.53 A"/>
    <property type="chains" value="L=1-144"/>
</dbReference>
<dbReference type="PDB" id="8E45">
    <property type="method" value="EM"/>
    <property type="resolution" value="2.30 A"/>
    <property type="chains" value="L=1-144"/>
</dbReference>
<dbReference type="PDB" id="8E46">
    <property type="method" value="EM"/>
    <property type="resolution" value="2.32 A"/>
    <property type="chains" value="L=1-144"/>
</dbReference>
<dbReference type="PDB" id="8E47">
    <property type="method" value="EM"/>
    <property type="resolution" value="2.32 A"/>
    <property type="chains" value="L=1-144"/>
</dbReference>
<dbReference type="PDB" id="8E48">
    <property type="method" value="EM"/>
    <property type="resolution" value="2.27 A"/>
    <property type="chains" value="L=1-144"/>
</dbReference>
<dbReference type="PDB" id="8E49">
    <property type="method" value="EM"/>
    <property type="resolution" value="2.05 A"/>
    <property type="chains" value="L=1-144"/>
</dbReference>
<dbReference type="PDB" id="8EIU">
    <property type="method" value="EM"/>
    <property type="resolution" value="2.24 A"/>
    <property type="chains" value="k=1-144"/>
</dbReference>
<dbReference type="PDB" id="8EKC">
    <property type="method" value="EM"/>
    <property type="resolution" value="2.70 A"/>
    <property type="chains" value="N=1-144"/>
</dbReference>
<dbReference type="PDB" id="8EMM">
    <property type="method" value="EM"/>
    <property type="resolution" value="2.10 A"/>
    <property type="chains" value="k=1-144"/>
</dbReference>
<dbReference type="PDB" id="8FIZ">
    <property type="method" value="EM"/>
    <property type="resolution" value="3.80 A"/>
    <property type="chains" value="BT=1-144"/>
</dbReference>
<dbReference type="PDB" id="8FTO">
    <property type="method" value="EM"/>
    <property type="resolution" value="1.85 A"/>
    <property type="chains" value="k=1-144"/>
</dbReference>
<dbReference type="PDB" id="8FZD">
    <property type="method" value="EM"/>
    <property type="resolution" value="3.10 A"/>
    <property type="chains" value="N=1-144"/>
</dbReference>
<dbReference type="PDB" id="8FZE">
    <property type="method" value="EM"/>
    <property type="resolution" value="3.00 A"/>
    <property type="chains" value="N=1-144"/>
</dbReference>
<dbReference type="PDB" id="8FZF">
    <property type="method" value="EM"/>
    <property type="resolution" value="3.20 A"/>
    <property type="chains" value="N=1-144"/>
</dbReference>
<dbReference type="PDB" id="8FZG">
    <property type="method" value="EM"/>
    <property type="resolution" value="3.10 A"/>
    <property type="chains" value="N=1-144"/>
</dbReference>
<dbReference type="PDB" id="8FZH">
    <property type="method" value="EM"/>
    <property type="resolution" value="2.90 A"/>
    <property type="chains" value="N=1-144"/>
</dbReference>
<dbReference type="PDB" id="8FZI">
    <property type="method" value="EM"/>
    <property type="resolution" value="3.10 A"/>
    <property type="chains" value="N=1-144"/>
</dbReference>
<dbReference type="PDB" id="8FZJ">
    <property type="method" value="EM"/>
    <property type="resolution" value="3.00 A"/>
    <property type="chains" value="N=1-144"/>
</dbReference>
<dbReference type="PDB" id="8G2U">
    <property type="method" value="EM"/>
    <property type="resolution" value="3.00 A"/>
    <property type="chains" value="L=2-144"/>
</dbReference>
<dbReference type="PDB" id="8G31">
    <property type="method" value="EM"/>
    <property type="resolution" value="3.20 A"/>
    <property type="chains" value="L=2-144"/>
</dbReference>
<dbReference type="PDB" id="8G34">
    <property type="method" value="EM"/>
    <property type="resolution" value="3.20 A"/>
    <property type="chains" value="L=2-144"/>
</dbReference>
<dbReference type="PDB" id="8G38">
    <property type="method" value="EM"/>
    <property type="resolution" value="3.20 A"/>
    <property type="chains" value="L=2-144"/>
</dbReference>
<dbReference type="PDB" id="8G6W">
    <property type="method" value="EM"/>
    <property type="resolution" value="2.02 A"/>
    <property type="chains" value="k=1-144"/>
</dbReference>
<dbReference type="PDB" id="8G6X">
    <property type="method" value="EM"/>
    <property type="resolution" value="2.31 A"/>
    <property type="chains" value="k=1-144"/>
</dbReference>
<dbReference type="PDB" id="8G6Y">
    <property type="method" value="EM"/>
    <property type="resolution" value="2.09 A"/>
    <property type="chains" value="k=1-144"/>
</dbReference>
<dbReference type="PDB" id="8G7P">
    <property type="method" value="EM"/>
    <property type="resolution" value="2.90 A"/>
    <property type="chains" value="N=1-144"/>
</dbReference>
<dbReference type="PDB" id="8G7Q">
    <property type="method" value="EM"/>
    <property type="resolution" value="3.10 A"/>
    <property type="chains" value="N=1-144"/>
</dbReference>
<dbReference type="PDB" id="8G7R">
    <property type="method" value="EM"/>
    <property type="resolution" value="2.80 A"/>
    <property type="chains" value="N=1-144"/>
</dbReference>
<dbReference type="PDB" id="8G7S">
    <property type="method" value="EM"/>
    <property type="resolution" value="3.10 A"/>
    <property type="chains" value="N=1-144"/>
</dbReference>
<dbReference type="PDB" id="8HSP">
    <property type="method" value="EM"/>
    <property type="resolution" value="2.32 A"/>
    <property type="chains" value="k=1-144"/>
</dbReference>
<dbReference type="PDB" id="8HTZ">
    <property type="method" value="EM"/>
    <property type="resolution" value="2.40 A"/>
    <property type="chains" value="k=1-144"/>
</dbReference>
<dbReference type="PDB" id="8HU1">
    <property type="method" value="EM"/>
    <property type="resolution" value="2.69 A"/>
    <property type="chains" value="k=1-144"/>
</dbReference>
<dbReference type="PDB" id="8IFB">
    <property type="method" value="EM"/>
    <property type="resolution" value="2.43 A"/>
    <property type="chains" value="k=1-144"/>
</dbReference>
<dbReference type="PDB" id="8IFC">
    <property type="method" value="EM"/>
    <property type="resolution" value="2.90 A"/>
    <property type="chains" value="k=1-144"/>
</dbReference>
<dbReference type="PDB" id="8J1Z">
    <property type="method" value="EM"/>
    <property type="resolution" value="2.60 A"/>
    <property type="chains" value="k=1-144"/>
</dbReference>
<dbReference type="PDB" id="8P16">
    <property type="method" value="EM"/>
    <property type="resolution" value="2.77 A"/>
    <property type="chains" value="L=1-144"/>
</dbReference>
<dbReference type="PDB" id="8P17">
    <property type="method" value="EM"/>
    <property type="resolution" value="2.78 A"/>
    <property type="chains" value="L=1-144"/>
</dbReference>
<dbReference type="PDB" id="8P18">
    <property type="method" value="EM"/>
    <property type="resolution" value="2.77 A"/>
    <property type="chains" value="L=1-144"/>
</dbReference>
<dbReference type="PDB" id="8PEG">
    <property type="method" value="EM"/>
    <property type="resolution" value="3.30 A"/>
    <property type="chains" value="o=1-144"/>
</dbReference>
<dbReference type="PDB" id="8PHJ">
    <property type="method" value="EM"/>
    <property type="resolution" value="3.67 A"/>
    <property type="chains" value="k=1-144"/>
</dbReference>
<dbReference type="PDB" id="8PKL">
    <property type="method" value="EM"/>
    <property type="resolution" value="3.09 A"/>
    <property type="chains" value="o=1-144"/>
</dbReference>
<dbReference type="PDB" id="8PVA">
    <property type="method" value="EM"/>
    <property type="resolution" value="4.50 A"/>
    <property type="chains" value="k=1-144"/>
</dbReference>
<dbReference type="PDB" id="8Q4F">
    <property type="method" value="EM"/>
    <property type="resolution" value="3.10 A"/>
    <property type="chains" value="k=1-144"/>
</dbReference>
<dbReference type="PDB" id="8QBT">
    <property type="method" value="EM"/>
    <property type="resolution" value="2.20 A"/>
    <property type="chains" value="L=1-144"/>
</dbReference>
<dbReference type="PDB" id="8QK7">
    <property type="method" value="EM"/>
    <property type="resolution" value="2.77 A"/>
    <property type="chains" value="L=1-144"/>
</dbReference>
<dbReference type="PDB" id="8QOA">
    <property type="method" value="EM"/>
    <property type="resolution" value="2.00 A"/>
    <property type="chains" value="k=1-144"/>
</dbReference>
<dbReference type="PDB" id="8R3V">
    <property type="method" value="EM"/>
    <property type="resolution" value="3.28 A"/>
    <property type="chains" value="o2=1-144"/>
</dbReference>
<dbReference type="PDB" id="8R6C">
    <property type="method" value="EM"/>
    <property type="resolution" value="2.20 A"/>
    <property type="chains" value="k=1-144"/>
</dbReference>
<dbReference type="PDB" id="8R8M">
    <property type="method" value="EM"/>
    <property type="resolution" value="2.40 A"/>
    <property type="chains" value="k=1-144"/>
</dbReference>
<dbReference type="PDB" id="8RCL">
    <property type="method" value="EM"/>
    <property type="resolution" value="3.49 A"/>
    <property type="chains" value="o2=1-144"/>
</dbReference>
<dbReference type="PDB" id="8RCM">
    <property type="method" value="EM"/>
    <property type="resolution" value="3.59 A"/>
    <property type="chains" value="o2=1-144"/>
</dbReference>
<dbReference type="PDB" id="8RCS">
    <property type="method" value="EM"/>
    <property type="resolution" value="4.46 A"/>
    <property type="chains" value="o2=1-144"/>
</dbReference>
<dbReference type="PDB" id="8RCT">
    <property type="method" value="EM"/>
    <property type="resolution" value="5.32 A"/>
    <property type="chains" value="o2=1-144"/>
</dbReference>
<dbReference type="PDB" id="8RPY">
    <property type="method" value="EM"/>
    <property type="resolution" value="2.64 A"/>
    <property type="chains" value="L=2-144"/>
</dbReference>
<dbReference type="PDB" id="8RPZ">
    <property type="method" value="EM"/>
    <property type="resolution" value="2.44 A"/>
    <property type="chains" value="L=2-144"/>
</dbReference>
<dbReference type="PDB" id="8RQ0">
    <property type="method" value="EM"/>
    <property type="resolution" value="2.44 A"/>
    <property type="chains" value="L=2-144"/>
</dbReference>
<dbReference type="PDB" id="8RQ2">
    <property type="method" value="EM"/>
    <property type="resolution" value="2.44 A"/>
    <property type="chains" value="L=2-144"/>
</dbReference>
<dbReference type="PDB" id="8SYL">
    <property type="method" value="EM"/>
    <property type="resolution" value="2.90 A"/>
    <property type="chains" value="N=1-144"/>
</dbReference>
<dbReference type="PDB" id="8T5D">
    <property type="method" value="EM"/>
    <property type="resolution" value="3.20 A"/>
    <property type="chains" value="L=2-144"/>
</dbReference>
<dbReference type="PDB" id="8T5H">
    <property type="method" value="EM"/>
    <property type="resolution" value="3.30 A"/>
    <property type="chains" value="L=2-144"/>
</dbReference>
<dbReference type="PDB" id="8VS9">
    <property type="method" value="EM"/>
    <property type="resolution" value="3.90 A"/>
    <property type="chains" value="L15=1-144"/>
</dbReference>
<dbReference type="PDB" id="8VSA">
    <property type="method" value="EM"/>
    <property type="resolution" value="3.70 A"/>
    <property type="chains" value="L15=1-144"/>
</dbReference>
<dbReference type="PDB" id="8W51">
    <property type="method" value="EM"/>
    <property type="resolution" value="2.40 A"/>
    <property type="chains" value="M=1-144"/>
</dbReference>
<dbReference type="PDB" id="8YUO">
    <property type="method" value="EM"/>
    <property type="resolution" value="2.25 A"/>
    <property type="chains" value="k=1-144"/>
</dbReference>
<dbReference type="PDB" id="8YUP">
    <property type="method" value="EM"/>
    <property type="resolution" value="2.39 A"/>
    <property type="chains" value="k=1-144"/>
</dbReference>
<dbReference type="PDB" id="8YUQ">
    <property type="method" value="EM"/>
    <property type="resolution" value="2.41 A"/>
    <property type="chains" value="k=1-144"/>
</dbReference>
<dbReference type="PDB" id="8YUR">
    <property type="method" value="EM"/>
    <property type="resolution" value="2.47 A"/>
    <property type="chains" value="k=1-144"/>
</dbReference>
<dbReference type="PDB" id="8YUS">
    <property type="method" value="EM"/>
    <property type="resolution" value="2.43 A"/>
    <property type="chains" value="k=1-144"/>
</dbReference>
<dbReference type="PDB" id="9D89">
    <property type="method" value="EM"/>
    <property type="resolution" value="1.95 A"/>
    <property type="chains" value="I=1-144"/>
</dbReference>
<dbReference type="PDB" id="9FBV">
    <property type="method" value="EM"/>
    <property type="resolution" value="2.40 A"/>
    <property type="chains" value="k=1-144"/>
</dbReference>
<dbReference type="PDB" id="9GFT">
    <property type="method" value="EM"/>
    <property type="resolution" value="3.10 A"/>
    <property type="chains" value="Ag/Y=1-144"/>
</dbReference>
<dbReference type="PDB" id="9GGR">
    <property type="method" value="EM"/>
    <property type="resolution" value="3.20 A"/>
    <property type="chains" value="Ag/Y=1-144"/>
</dbReference>
<dbReference type="PDB" id="9H3K">
    <property type="method" value="EM"/>
    <property type="resolution" value="6.62 A"/>
    <property type="chains" value="L=2-144"/>
</dbReference>
<dbReference type="PDB" id="9H3L">
    <property type="method" value="EM"/>
    <property type="resolution" value="5.84 A"/>
    <property type="chains" value="L=2-144"/>
</dbReference>
<dbReference type="PDB" id="9H3M">
    <property type="method" value="EM"/>
    <property type="resolution" value="4.41 A"/>
    <property type="chains" value="L=2-144"/>
</dbReference>
<dbReference type="PDB" id="9H3N">
    <property type="method" value="EM"/>
    <property type="resolution" value="3.69 A"/>
    <property type="chains" value="L=2-144"/>
</dbReference>
<dbReference type="PDB" id="9H3O">
    <property type="method" value="EM"/>
    <property type="resolution" value="4.54 A"/>
    <property type="chains" value="L=2-144"/>
</dbReference>
<dbReference type="PDB" id="9H3P">
    <property type="method" value="EM"/>
    <property type="resolution" value="7.06 A"/>
    <property type="chains" value="L=2-144"/>
</dbReference>
<dbReference type="PDB" id="9H3Q">
    <property type="method" value="EM"/>
    <property type="resolution" value="4.02 A"/>
    <property type="chains" value="L=2-144"/>
</dbReference>
<dbReference type="PDB" id="9H3R">
    <property type="method" value="EM"/>
    <property type="resolution" value="4.12 A"/>
    <property type="chains" value="L=2-144"/>
</dbReference>
<dbReference type="PDB" id="9H3S">
    <property type="method" value="EM"/>
    <property type="resolution" value="4.16 A"/>
    <property type="chains" value="L=2-144"/>
</dbReference>
<dbReference type="PDB" id="9H3T">
    <property type="method" value="EM"/>
    <property type="resolution" value="3.85 A"/>
    <property type="chains" value="L=2-144"/>
</dbReference>
<dbReference type="PDB" id="9H3U">
    <property type="method" value="EM"/>
    <property type="resolution" value="3.47 A"/>
    <property type="chains" value="L=2-144"/>
</dbReference>
<dbReference type="PDB" id="9H3V">
    <property type="method" value="EM"/>
    <property type="resolution" value="3.55 A"/>
    <property type="chains" value="L=2-144"/>
</dbReference>
<dbReference type="PDB" id="9H3W">
    <property type="method" value="EM"/>
    <property type="resolution" value="5.38 A"/>
    <property type="chains" value="L=2-144"/>
</dbReference>
<dbReference type="PDB" id="9H3X">
    <property type="method" value="EM"/>
    <property type="resolution" value="4.12 A"/>
    <property type="chains" value="L=2-144"/>
</dbReference>
<dbReference type="PDB" id="9H3Y">
    <property type="method" value="EM"/>
    <property type="resolution" value="3.09 A"/>
    <property type="chains" value="L=2-144"/>
</dbReference>
<dbReference type="PDB" id="9H3Z">
    <property type="method" value="EM"/>
    <property type="resolution" value="2.98 A"/>
    <property type="chains" value="L=2-144"/>
</dbReference>
<dbReference type="PDB" id="9HA1">
    <property type="method" value="EM"/>
    <property type="resolution" value="4.17 A"/>
    <property type="chains" value="L=2-144"/>
</dbReference>
<dbReference type="PDB" id="9HA2">
    <property type="method" value="EM"/>
    <property type="resolution" value="4.17 A"/>
    <property type="chains" value="L=2-144"/>
</dbReference>
<dbReference type="PDB" id="9HA3">
    <property type="method" value="EM"/>
    <property type="resolution" value="3.62 A"/>
    <property type="chains" value="L=2-144"/>
</dbReference>
<dbReference type="PDB" id="9HA4">
    <property type="method" value="EM"/>
    <property type="resolution" value="4.26 A"/>
    <property type="chains" value="L=2-144"/>
</dbReference>
<dbReference type="PDB" id="9HA5">
    <property type="method" value="EM"/>
    <property type="resolution" value="3.30 A"/>
    <property type="chains" value="L=2-144"/>
</dbReference>
<dbReference type="PDB" id="9HA6">
    <property type="method" value="EM"/>
    <property type="resolution" value="3.08 A"/>
    <property type="chains" value="L=2-144"/>
</dbReference>
<dbReference type="PDB" id="9HA7">
    <property type="method" value="EM"/>
    <property type="resolution" value="4.37 A"/>
    <property type="chains" value="L=2-144"/>
</dbReference>
<dbReference type="PDB" id="9HAI">
    <property type="method" value="EM"/>
    <property type="resolution" value="3.01 A"/>
    <property type="chains" value="L=2-144"/>
</dbReference>
<dbReference type="PDB" id="9HAL">
    <property type="method" value="EM"/>
    <property type="resolution" value="4.49 A"/>
    <property type="chains" value="L=2-144"/>
</dbReference>
<dbReference type="PDB" id="9HAM">
    <property type="method" value="EM"/>
    <property type="resolution" value="5.06 A"/>
    <property type="chains" value="L=2-144"/>
</dbReference>
<dbReference type="PDB" id="9MOR">
    <property type="method" value="EM"/>
    <property type="resolution" value="2.65 A"/>
    <property type="chains" value="L=1-144"/>
</dbReference>
<dbReference type="PDB" id="9MQ4">
    <property type="method" value="EM"/>
    <property type="resolution" value="2.78 A"/>
    <property type="chains" value="L=1-144"/>
</dbReference>
<dbReference type="PDBsum" id="1ML5"/>
<dbReference type="PDBsum" id="2J28"/>
<dbReference type="PDBsum" id="2RDO"/>
<dbReference type="PDBsum" id="3BBX"/>
<dbReference type="PDBsum" id="3IY9"/>
<dbReference type="PDBsum" id="3J5L"/>
<dbReference type="PDBsum" id="3J7Z"/>
<dbReference type="PDBsum" id="3J8G"/>
<dbReference type="PDBsum" id="3J9Y"/>
<dbReference type="PDBsum" id="3J9Z"/>
<dbReference type="PDBsum" id="3JA1"/>
<dbReference type="PDBsum" id="3JBU"/>
<dbReference type="PDBsum" id="3JBV"/>
<dbReference type="PDBsum" id="3JCD"/>
<dbReference type="PDBsum" id="3JCE"/>
<dbReference type="PDBsum" id="3JCJ"/>
<dbReference type="PDBsum" id="3JCN"/>
<dbReference type="PDBsum" id="4CSU"/>
<dbReference type="PDBsum" id="4U1U"/>
<dbReference type="PDBsum" id="4U1V"/>
<dbReference type="PDBsum" id="4U20"/>
<dbReference type="PDBsum" id="4U24"/>
<dbReference type="PDBsum" id="4U25"/>
<dbReference type="PDBsum" id="4U26"/>
<dbReference type="PDBsum" id="4U27"/>
<dbReference type="PDBsum" id="4UY8"/>
<dbReference type="PDBsum" id="4V47"/>
<dbReference type="PDBsum" id="4V48"/>
<dbReference type="PDBsum" id="4V4H"/>
<dbReference type="PDBsum" id="4V4Q"/>
<dbReference type="PDBsum" id="4V4V"/>
<dbReference type="PDBsum" id="4V4W"/>
<dbReference type="PDBsum" id="4V50"/>
<dbReference type="PDBsum" id="4V52"/>
<dbReference type="PDBsum" id="4V53"/>
<dbReference type="PDBsum" id="4V54"/>
<dbReference type="PDBsum" id="4V55"/>
<dbReference type="PDBsum" id="4V56"/>
<dbReference type="PDBsum" id="4V57"/>
<dbReference type="PDBsum" id="4V5B"/>
<dbReference type="PDBsum" id="4V5H"/>
<dbReference type="PDBsum" id="4V5Y"/>
<dbReference type="PDBsum" id="4V64"/>
<dbReference type="PDBsum" id="4V65"/>
<dbReference type="PDBsum" id="4V66"/>
<dbReference type="PDBsum" id="4V69"/>
<dbReference type="PDBsum" id="4V6C"/>
<dbReference type="PDBsum" id="4V6D"/>
<dbReference type="PDBsum" id="4V6E"/>
<dbReference type="PDBsum" id="4V6K"/>
<dbReference type="PDBsum" id="4V6L"/>
<dbReference type="PDBsum" id="4V6M"/>
<dbReference type="PDBsum" id="4V6N"/>
<dbReference type="PDBsum" id="4V6O"/>
<dbReference type="PDBsum" id="4V6P"/>
<dbReference type="PDBsum" id="4V6Q"/>
<dbReference type="PDBsum" id="4V6R"/>
<dbReference type="PDBsum" id="4V6S"/>
<dbReference type="PDBsum" id="4V6T"/>
<dbReference type="PDBsum" id="4V6V"/>
<dbReference type="PDBsum" id="4V6Y"/>
<dbReference type="PDBsum" id="4V6Z"/>
<dbReference type="PDBsum" id="4V70"/>
<dbReference type="PDBsum" id="4V71"/>
<dbReference type="PDBsum" id="4V72"/>
<dbReference type="PDBsum" id="4V73"/>
<dbReference type="PDBsum" id="4V74"/>
<dbReference type="PDBsum" id="4V75"/>
<dbReference type="PDBsum" id="4V76"/>
<dbReference type="PDBsum" id="4V77"/>
<dbReference type="PDBsum" id="4V78"/>
<dbReference type="PDBsum" id="4V79"/>
<dbReference type="PDBsum" id="4V7A"/>
<dbReference type="PDBsum" id="4V7B"/>
<dbReference type="PDBsum" id="4V7C"/>
<dbReference type="PDBsum" id="4V7D"/>
<dbReference type="PDBsum" id="4V7I"/>
<dbReference type="PDBsum" id="4V7S"/>
<dbReference type="PDBsum" id="4V7T"/>
<dbReference type="PDBsum" id="4V7U"/>
<dbReference type="PDBsum" id="4V7V"/>
<dbReference type="PDBsum" id="4V85"/>
<dbReference type="PDBsum" id="4V89"/>
<dbReference type="PDBsum" id="4V9C"/>
<dbReference type="PDBsum" id="4V9D"/>
<dbReference type="PDBsum" id="4V9O"/>
<dbReference type="PDBsum" id="4V9P"/>
<dbReference type="PDBsum" id="4WF1"/>
<dbReference type="PDBsum" id="4WOI"/>
<dbReference type="PDBsum" id="4WWW"/>
<dbReference type="PDBsum" id="4YBB"/>
<dbReference type="PDBsum" id="5ADY"/>
<dbReference type="PDBsum" id="5AFI"/>
<dbReference type="PDBsum" id="5AKA"/>
<dbReference type="PDBsum" id="5GAD"/>
<dbReference type="PDBsum" id="5GAE"/>
<dbReference type="PDBsum" id="5GAF"/>
<dbReference type="PDBsum" id="5GAG"/>
<dbReference type="PDBsum" id="5GAH"/>
<dbReference type="PDBsum" id="5H5U"/>
<dbReference type="PDBsum" id="5IQR"/>
<dbReference type="PDBsum" id="5IT8"/>
<dbReference type="PDBsum" id="5J5B"/>
<dbReference type="PDBsum" id="5J7L"/>
<dbReference type="PDBsum" id="5J88"/>
<dbReference type="PDBsum" id="5J8A"/>
<dbReference type="PDBsum" id="5J91"/>
<dbReference type="PDBsum" id="5JC9"/>
<dbReference type="PDBsum" id="5JTE"/>
<dbReference type="PDBsum" id="5JU8"/>
<dbReference type="PDBsum" id="5KCR"/>
<dbReference type="PDBsum" id="5KCS"/>
<dbReference type="PDBsum" id="5KPS"/>
<dbReference type="PDBsum" id="5KPV"/>
<dbReference type="PDBsum" id="5KPW"/>
<dbReference type="PDBsum" id="5KPX"/>
<dbReference type="PDBsum" id="5L3P"/>
<dbReference type="PDBsum" id="5LZA"/>
<dbReference type="PDBsum" id="5LZB"/>
<dbReference type="PDBsum" id="5LZC"/>
<dbReference type="PDBsum" id="5LZD"/>
<dbReference type="PDBsum" id="5LZE"/>
<dbReference type="PDBsum" id="5LZF"/>
<dbReference type="PDBsum" id="5MDV"/>
<dbReference type="PDBsum" id="5MDW"/>
<dbReference type="PDBsum" id="5MDY"/>
<dbReference type="PDBsum" id="5MDZ"/>
<dbReference type="PDBsum" id="5MGP"/>
<dbReference type="PDBsum" id="5NCO"/>
<dbReference type="PDBsum" id="5NP6"/>
<dbReference type="PDBsum" id="5NWY"/>
<dbReference type="PDBsum" id="5O2R"/>
<dbReference type="PDBsum" id="5U4I"/>
<dbReference type="PDBsum" id="5U9F"/>
<dbReference type="PDBsum" id="5U9G"/>
<dbReference type="PDBsum" id="5UYK"/>
<dbReference type="PDBsum" id="5UYL"/>
<dbReference type="PDBsum" id="5UYM"/>
<dbReference type="PDBsum" id="5UYN"/>
<dbReference type="PDBsum" id="5UYP"/>
<dbReference type="PDBsum" id="5UYQ"/>
<dbReference type="PDBsum" id="5WDT"/>
<dbReference type="PDBsum" id="5WE4"/>
<dbReference type="PDBsum" id="5WE6"/>
<dbReference type="PDBsum" id="5WF0"/>
<dbReference type="PDBsum" id="5WFK"/>
<dbReference type="PDBsum" id="5WFS"/>
<dbReference type="PDBsum" id="6BU8"/>
<dbReference type="PDBsum" id="6BY1"/>
<dbReference type="PDBsum" id="6C4I"/>
<dbReference type="PDBsum" id="6DNC"/>
<dbReference type="PDBsum" id="6ENF"/>
<dbReference type="PDBsum" id="6ENJ"/>
<dbReference type="PDBsum" id="6ENU"/>
<dbReference type="PDBsum" id="6GBZ"/>
<dbReference type="PDBsum" id="6GC0"/>
<dbReference type="PDBsum" id="6GC4"/>
<dbReference type="PDBsum" id="6GC6"/>
<dbReference type="PDBsum" id="6GC7"/>
<dbReference type="PDBsum" id="6GC8"/>
<dbReference type="PDBsum" id="6GWT"/>
<dbReference type="PDBsum" id="6GXM"/>
<dbReference type="PDBsum" id="6GXN"/>
<dbReference type="PDBsum" id="6GXO"/>
<dbReference type="PDBsum" id="6GXP"/>
<dbReference type="PDBsum" id="6H4N"/>
<dbReference type="PDBsum" id="6H58"/>
<dbReference type="PDBsum" id="6HRM"/>
<dbReference type="PDBsum" id="6I0Y"/>
<dbReference type="PDBsum" id="6I7V"/>
<dbReference type="PDBsum" id="6O9J"/>
<dbReference type="PDBsum" id="6O9K"/>
<dbReference type="PDBsum" id="6OFX"/>
<dbReference type="PDBsum" id="6OG7"/>
<dbReference type="PDBsum" id="6OGF"/>
<dbReference type="PDBsum" id="6OGG"/>
<dbReference type="PDBsum" id="6OGI"/>
<dbReference type="PDBsum" id="6OM6"/>
<dbReference type="PDBsum" id="6ORE"/>
<dbReference type="PDBsum" id="6ORL"/>
<dbReference type="PDBsum" id="6OSK"/>
<dbReference type="PDBsum" id="6OSQ"/>
<dbReference type="PDBsum" id="6OST"/>
<dbReference type="PDBsum" id="6OT3"/>
<dbReference type="PDBsum" id="6OUO"/>
<dbReference type="PDBsum" id="6PC5"/>
<dbReference type="PDBsum" id="6PC6"/>
<dbReference type="PDBsum" id="6PC7"/>
<dbReference type="PDBsum" id="6PC8"/>
<dbReference type="PDBsum" id="6PCH"/>
<dbReference type="PDBsum" id="6PCQ"/>
<dbReference type="PDBsum" id="6PCR"/>
<dbReference type="PDBsum" id="6PCS"/>
<dbReference type="PDBsum" id="6PCT"/>
<dbReference type="PDBsum" id="6PJ6"/>
<dbReference type="PDBsum" id="6Q97"/>
<dbReference type="PDBsum" id="6Q98"/>
<dbReference type="PDBsum" id="6Q9A"/>
<dbReference type="PDBsum" id="6QDW"/>
<dbReference type="PDBsum" id="6QUL"/>
<dbReference type="PDBsum" id="6S0K"/>
<dbReference type="PDBsum" id="6SZS"/>
<dbReference type="PDBsum" id="6TBV"/>
<dbReference type="PDBsum" id="6TC3"/>
<dbReference type="PDBsum" id="6U48"/>
<dbReference type="PDBsum" id="6VU3"/>
<dbReference type="PDBsum" id="6VWL"/>
<dbReference type="PDBsum" id="6VWM"/>
<dbReference type="PDBsum" id="6VWN"/>
<dbReference type="PDBsum" id="6VYQ"/>
<dbReference type="PDBsum" id="6VYR"/>
<dbReference type="PDBsum" id="6VYS"/>
<dbReference type="PDBsum" id="6VYT"/>
<dbReference type="PDBsum" id="6VYU"/>
<dbReference type="PDBsum" id="6VYW"/>
<dbReference type="PDBsum" id="6VYX"/>
<dbReference type="PDBsum" id="6VYY"/>
<dbReference type="PDBsum" id="6VYZ"/>
<dbReference type="PDBsum" id="6VZ2"/>
<dbReference type="PDBsum" id="6VZ3"/>
<dbReference type="PDBsum" id="6VZ5"/>
<dbReference type="PDBsum" id="6VZ7"/>
<dbReference type="PDBsum" id="6VZJ"/>
<dbReference type="PDBsum" id="6WD0"/>
<dbReference type="PDBsum" id="6WD1"/>
<dbReference type="PDBsum" id="6WD2"/>
<dbReference type="PDBsum" id="6WD3"/>
<dbReference type="PDBsum" id="6WD4"/>
<dbReference type="PDBsum" id="6WD5"/>
<dbReference type="PDBsum" id="6WD6"/>
<dbReference type="PDBsum" id="6WD7"/>
<dbReference type="PDBsum" id="6WD8"/>
<dbReference type="PDBsum" id="6WD9"/>
<dbReference type="PDBsum" id="6WDA"/>
<dbReference type="PDBsum" id="6WDB"/>
<dbReference type="PDBsum" id="6WDC"/>
<dbReference type="PDBsum" id="6WDD"/>
<dbReference type="PDBsum" id="6WDE"/>
<dbReference type="PDBsum" id="6WDF"/>
<dbReference type="PDBsum" id="6WDG"/>
<dbReference type="PDBsum" id="6WDH"/>
<dbReference type="PDBsum" id="6WDI"/>
<dbReference type="PDBsum" id="6WDJ"/>
<dbReference type="PDBsum" id="6WDK"/>
<dbReference type="PDBsum" id="6WDL"/>
<dbReference type="PDBsum" id="6WDM"/>
<dbReference type="PDBsum" id="6WNT"/>
<dbReference type="PDBsum" id="6WNV"/>
<dbReference type="PDBsum" id="6WNW"/>
<dbReference type="PDBsum" id="6WYV"/>
<dbReference type="PDBsum" id="6X6T"/>
<dbReference type="PDBsum" id="6X7F"/>
<dbReference type="PDBsum" id="6X7K"/>
<dbReference type="PDBsum" id="6X9Q"/>
<dbReference type="PDBsum" id="6XDQ"/>
<dbReference type="PDBsum" id="6XDR"/>
<dbReference type="PDBsum" id="6XGF"/>
<dbReference type="PDBsum" id="6XII"/>
<dbReference type="PDBsum" id="6XIJ"/>
<dbReference type="PDBsum" id="6XZ7"/>
<dbReference type="PDBsum" id="6XZA"/>
<dbReference type="PDBsum" id="6XZB"/>
<dbReference type="PDBsum" id="6Y69"/>
<dbReference type="PDBsum" id="6YS3"/>
<dbReference type="PDBsum" id="6YSR"/>
<dbReference type="PDBsum" id="6YSS"/>
<dbReference type="PDBsum" id="6YST"/>
<dbReference type="PDBsum" id="6YSU"/>
<dbReference type="PDBsum" id="6ZTJ"/>
<dbReference type="PDBsum" id="6ZTL"/>
<dbReference type="PDBsum" id="6ZTM"/>
<dbReference type="PDBsum" id="6ZTN"/>
<dbReference type="PDBsum" id="6ZTO"/>
<dbReference type="PDBsum" id="6ZTP"/>
<dbReference type="PDBsum" id="6ZU1"/>
<dbReference type="PDBsum" id="7ABZ"/>
<dbReference type="PDBsum" id="7AC7"/>
<dbReference type="PDBsum" id="7ACJ"/>
<dbReference type="PDBsum" id="7ACR"/>
<dbReference type="PDBsum" id="7B5K"/>
<dbReference type="PDBsum" id="7BL2"/>
<dbReference type="PDBsum" id="7BL3"/>
<dbReference type="PDBsum" id="7BL4"/>
<dbReference type="PDBsum" id="7BL5"/>
<dbReference type="PDBsum" id="7BL6"/>
<dbReference type="PDBsum" id="7BV8"/>
<dbReference type="PDBsum" id="7D6Z"/>
<dbReference type="PDBsum" id="7D80"/>
<dbReference type="PDBsum" id="7JSS"/>
<dbReference type="PDBsum" id="7JSW"/>
<dbReference type="PDBsum" id="7JSZ"/>
<dbReference type="PDBsum" id="7JT1"/>
<dbReference type="PDBsum" id="7JT2"/>
<dbReference type="PDBsum" id="7JT3"/>
<dbReference type="PDBsum" id="7K00"/>
<dbReference type="PDBsum" id="7K50"/>
<dbReference type="PDBsum" id="7K51"/>
<dbReference type="PDBsum" id="7K52"/>
<dbReference type="PDBsum" id="7K53"/>
<dbReference type="PDBsum" id="7K54"/>
<dbReference type="PDBsum" id="7K55"/>
<dbReference type="PDBsum" id="7LV0"/>
<dbReference type="PDBsum" id="7LVK"/>
<dbReference type="PDBsum" id="7M5D"/>
<dbReference type="PDBsum" id="7N1P"/>
<dbReference type="PDBsum" id="7N2C"/>
<dbReference type="PDBsum" id="7N2U"/>
<dbReference type="PDBsum" id="7N2V"/>
<dbReference type="PDBsum" id="7N30"/>
<dbReference type="PDBsum" id="7N31"/>
<dbReference type="PDBsum" id="7NBU"/>
<dbReference type="PDBsum" id="7NSO"/>
<dbReference type="PDBsum" id="7NSP"/>
<dbReference type="PDBsum" id="7NSQ"/>
<dbReference type="PDBsum" id="7NWT"/>
<dbReference type="PDBsum" id="7NWW"/>
<dbReference type="PDBsum" id="7O19"/>
<dbReference type="PDBsum" id="7O1A"/>
<dbReference type="PDBsum" id="7O1C"/>
<dbReference type="PDBsum" id="7OIF"/>
<dbReference type="PDBsum" id="7OIG"/>
<dbReference type="PDBsum" id="7OII"/>
<dbReference type="PDBsum" id="7OIZ"/>
<dbReference type="PDBsum" id="7OJ0"/>
<dbReference type="PDBsum" id="7OT5"/>
<dbReference type="PDBsum" id="7P3K"/>
<dbReference type="PDBsum" id="7PJS"/>
<dbReference type="PDBsum" id="7PJT"/>
<dbReference type="PDBsum" id="7PJV"/>
<dbReference type="PDBsum" id="7PJW"/>
<dbReference type="PDBsum" id="7PJX"/>
<dbReference type="PDBsum" id="7PJY"/>
<dbReference type="PDBsum" id="7PJZ"/>
<dbReference type="PDBsum" id="7Q4K"/>
<dbReference type="PDBsum" id="7QG8"/>
<dbReference type="PDBsum" id="7QGH"/>
<dbReference type="PDBsum" id="7QGN"/>
<dbReference type="PDBsum" id="7QGR"/>
<dbReference type="PDBsum" id="7QQ3"/>
<dbReference type="PDBsum" id="7S1G"/>
<dbReference type="PDBsum" id="7S1H"/>
<dbReference type="PDBsum" id="7S1I"/>
<dbReference type="PDBsum" id="7S1J"/>
<dbReference type="PDBsum" id="7S1K"/>
<dbReference type="PDBsum" id="7SA4"/>
<dbReference type="PDBsum" id="7SS9"/>
<dbReference type="PDBsum" id="7SSD"/>
<dbReference type="PDBsum" id="7SSL"/>
<dbReference type="PDBsum" id="7SSN"/>
<dbReference type="PDBsum" id="7SSO"/>
<dbReference type="PDBsum" id="7SSW"/>
<dbReference type="PDBsum" id="7ST2"/>
<dbReference type="PDBsum" id="7ST6"/>
<dbReference type="PDBsum" id="7ST7"/>
<dbReference type="PDBsum" id="7TOS"/>
<dbReference type="PDBsum" id="7UG7"/>
<dbReference type="PDBsum" id="7UPH"/>
<dbReference type="PDBsum" id="7Y7C"/>
<dbReference type="PDBsum" id="7Y7D"/>
<dbReference type="PDBsum" id="7Y7E"/>
<dbReference type="PDBsum" id="7Y7F"/>
<dbReference type="PDBsum" id="7Y7G"/>
<dbReference type="PDBsum" id="7Y7H"/>
<dbReference type="PDBsum" id="7YLA"/>
<dbReference type="PDBsum" id="7Z20"/>
<dbReference type="PDBsum" id="7ZOD"/>
<dbReference type="PDBsum" id="7ZP8"/>
<dbReference type="PDBsum" id="7ZQ5"/>
<dbReference type="PDBsum" id="7ZQ6"/>
<dbReference type="PDBsum" id="7ZTA"/>
<dbReference type="PDBsum" id="8A3L"/>
<dbReference type="PDBsum" id="8AKN"/>
<dbReference type="PDBsum" id="8AM9"/>
<dbReference type="PDBsum" id="8ANA"/>
<dbReference type="PDBsum" id="8AP4"/>
<dbReference type="PDBsum" id="8AYE"/>
<dbReference type="PDBsum" id="8B0X"/>
<dbReference type="PDBsum" id="8B7Y"/>
<dbReference type="PDBsum" id="8BF7"/>
<dbReference type="PDBsum" id="8BGE"/>
<dbReference type="PDBsum" id="8BGH"/>
<dbReference type="PDBsum" id="8BH4"/>
<dbReference type="PDBsum" id="8BHJ"/>
<dbReference type="PDBsum" id="8BHL"/>
<dbReference type="PDBsum" id="8BHN"/>
<dbReference type="PDBsum" id="8BHP"/>
<dbReference type="PDBsum" id="8BIL"/>
<dbReference type="PDBsum" id="8BIM"/>
<dbReference type="PDBsum" id="8C8X"/>
<dbReference type="PDBsum" id="8C8Y"/>
<dbReference type="PDBsum" id="8C8Z"/>
<dbReference type="PDBsum" id="8C90"/>
<dbReference type="PDBsum" id="8C91"/>
<dbReference type="PDBsum" id="8C92"/>
<dbReference type="PDBsum" id="8C93"/>
<dbReference type="PDBsum" id="8C94"/>
<dbReference type="PDBsum" id="8C95"/>
<dbReference type="PDBsum" id="8C96"/>
<dbReference type="PDBsum" id="8C98"/>
<dbReference type="PDBsum" id="8C99"/>
<dbReference type="PDBsum" id="8CAM"/>
<dbReference type="PDBsum" id="8CEU"/>
<dbReference type="PDBsum" id="8CGD"/>
<dbReference type="PDBsum" id="8CGK"/>
<dbReference type="PDBsum" id="8CGV"/>
<dbReference type="PDBsum" id="8E30"/>
<dbReference type="PDBsum" id="8E32"/>
<dbReference type="PDBsum" id="8E33"/>
<dbReference type="PDBsum" id="8E35"/>
<dbReference type="PDBsum" id="8E36"/>
<dbReference type="PDBsum" id="8E3L"/>
<dbReference type="PDBsum" id="8E3M"/>
<dbReference type="PDBsum" id="8E3O"/>
<dbReference type="PDBsum" id="8E41"/>
<dbReference type="PDBsum" id="8E42"/>
<dbReference type="PDBsum" id="8E43"/>
<dbReference type="PDBsum" id="8E44"/>
<dbReference type="PDBsum" id="8E45"/>
<dbReference type="PDBsum" id="8E46"/>
<dbReference type="PDBsum" id="8E47"/>
<dbReference type="PDBsum" id="8E48"/>
<dbReference type="PDBsum" id="8E49"/>
<dbReference type="PDBsum" id="8EIU"/>
<dbReference type="PDBsum" id="8EKC"/>
<dbReference type="PDBsum" id="8EMM"/>
<dbReference type="PDBsum" id="8FIZ"/>
<dbReference type="PDBsum" id="8FTO"/>
<dbReference type="PDBsum" id="8FZD"/>
<dbReference type="PDBsum" id="8FZE"/>
<dbReference type="PDBsum" id="8FZF"/>
<dbReference type="PDBsum" id="8FZG"/>
<dbReference type="PDBsum" id="8FZH"/>
<dbReference type="PDBsum" id="8FZI"/>
<dbReference type="PDBsum" id="8FZJ"/>
<dbReference type="PDBsum" id="8G2U"/>
<dbReference type="PDBsum" id="8G31"/>
<dbReference type="PDBsum" id="8G34"/>
<dbReference type="PDBsum" id="8G38"/>
<dbReference type="PDBsum" id="8G6W"/>
<dbReference type="PDBsum" id="8G6X"/>
<dbReference type="PDBsum" id="8G6Y"/>
<dbReference type="PDBsum" id="8G7P"/>
<dbReference type="PDBsum" id="8G7Q"/>
<dbReference type="PDBsum" id="8G7R"/>
<dbReference type="PDBsum" id="8G7S"/>
<dbReference type="PDBsum" id="8HSP"/>
<dbReference type="PDBsum" id="8HTZ"/>
<dbReference type="PDBsum" id="8HU1"/>
<dbReference type="PDBsum" id="8IFB"/>
<dbReference type="PDBsum" id="8IFC"/>
<dbReference type="PDBsum" id="8J1Z"/>
<dbReference type="PDBsum" id="8P16"/>
<dbReference type="PDBsum" id="8P17"/>
<dbReference type="PDBsum" id="8P18"/>
<dbReference type="PDBsum" id="8PEG"/>
<dbReference type="PDBsum" id="8PHJ"/>
<dbReference type="PDBsum" id="8PKL"/>
<dbReference type="PDBsum" id="8PVA"/>
<dbReference type="PDBsum" id="8Q4F"/>
<dbReference type="PDBsum" id="8QBT"/>
<dbReference type="PDBsum" id="8QK7"/>
<dbReference type="PDBsum" id="8QOA"/>
<dbReference type="PDBsum" id="8R3V"/>
<dbReference type="PDBsum" id="8R6C"/>
<dbReference type="PDBsum" id="8R8M"/>
<dbReference type="PDBsum" id="8RCL"/>
<dbReference type="PDBsum" id="8RCM"/>
<dbReference type="PDBsum" id="8RCS"/>
<dbReference type="PDBsum" id="8RCT"/>
<dbReference type="PDBsum" id="8RPY"/>
<dbReference type="PDBsum" id="8RPZ"/>
<dbReference type="PDBsum" id="8RQ0"/>
<dbReference type="PDBsum" id="8RQ2"/>
<dbReference type="PDBsum" id="8SYL"/>
<dbReference type="PDBsum" id="8T5D"/>
<dbReference type="PDBsum" id="8T5H"/>
<dbReference type="PDBsum" id="8VS9"/>
<dbReference type="PDBsum" id="8VSA"/>
<dbReference type="PDBsum" id="8W51"/>
<dbReference type="PDBsum" id="8YUO"/>
<dbReference type="PDBsum" id="8YUP"/>
<dbReference type="PDBsum" id="8YUQ"/>
<dbReference type="PDBsum" id="8YUR"/>
<dbReference type="PDBsum" id="8YUS"/>
<dbReference type="PDBsum" id="9D89"/>
<dbReference type="PDBsum" id="9FBV"/>
<dbReference type="PDBsum" id="9GFT"/>
<dbReference type="PDBsum" id="9GGR"/>
<dbReference type="PDBsum" id="9H3K"/>
<dbReference type="PDBsum" id="9H3L"/>
<dbReference type="PDBsum" id="9H3M"/>
<dbReference type="PDBsum" id="9H3N"/>
<dbReference type="PDBsum" id="9H3O"/>
<dbReference type="PDBsum" id="9H3P"/>
<dbReference type="PDBsum" id="9H3Q"/>
<dbReference type="PDBsum" id="9H3R"/>
<dbReference type="PDBsum" id="9H3S"/>
<dbReference type="PDBsum" id="9H3T"/>
<dbReference type="PDBsum" id="9H3U"/>
<dbReference type="PDBsum" id="9H3V"/>
<dbReference type="PDBsum" id="9H3W"/>
<dbReference type="PDBsum" id="9H3X"/>
<dbReference type="PDBsum" id="9H3Y"/>
<dbReference type="PDBsum" id="9H3Z"/>
<dbReference type="PDBsum" id="9HA1"/>
<dbReference type="PDBsum" id="9HA2"/>
<dbReference type="PDBsum" id="9HA3"/>
<dbReference type="PDBsum" id="9HA4"/>
<dbReference type="PDBsum" id="9HA5"/>
<dbReference type="PDBsum" id="9HA6"/>
<dbReference type="PDBsum" id="9HA7"/>
<dbReference type="PDBsum" id="9HAI"/>
<dbReference type="PDBsum" id="9HAL"/>
<dbReference type="PDBsum" id="9HAM"/>
<dbReference type="PDBsum" id="9MOR"/>
<dbReference type="PDBsum" id="9MQ4"/>
<dbReference type="EMDB" id="EMD-0076"/>
<dbReference type="EMDB" id="EMD-0080"/>
<dbReference type="EMDB" id="EMD-0081"/>
<dbReference type="EMDB" id="EMD-0082"/>
<dbReference type="EMDB" id="EMD-0083"/>
<dbReference type="EMDB" id="EMD-0137"/>
<dbReference type="EMDB" id="EMD-0139"/>
<dbReference type="EMDB" id="EMD-0261"/>
<dbReference type="EMDB" id="EMD-0322"/>
<dbReference type="EMDB" id="EMD-10073"/>
<dbReference type="EMDB" id="EMD-10353"/>
<dbReference type="EMDB" id="EMD-10453"/>
<dbReference type="EMDB" id="EMD-10458"/>
<dbReference type="EMDB" id="EMD-10655"/>
<dbReference type="EMDB" id="EMD-10656"/>
<dbReference type="EMDB" id="EMD-10657"/>
<dbReference type="EMDB" id="EMD-10705"/>
<dbReference type="EMDB" id="EMD-10905"/>
<dbReference type="EMDB" id="EMD-10906"/>
<dbReference type="EMDB" id="EMD-10907"/>
<dbReference type="EMDB" id="EMD-10908"/>
<dbReference type="EMDB" id="EMD-11418"/>
<dbReference type="EMDB" id="EMD-11420"/>
<dbReference type="EMDB" id="EMD-11421"/>
<dbReference type="EMDB" id="EMD-11422"/>
<dbReference type="EMDB" id="EMD-11423"/>
<dbReference type="EMDB" id="EMD-11426"/>
<dbReference type="EMDB" id="EMD-11710"/>
<dbReference type="EMDB" id="EMD-11713"/>
<dbReference type="EMDB" id="EMD-11717"/>
<dbReference type="EMDB" id="EMD-11718"/>
<dbReference type="EMDB" id="EMD-12035"/>
<dbReference type="EMDB" id="EMD-12215"/>
<dbReference type="EMDB" id="EMD-12216"/>
<dbReference type="EMDB" id="EMD-12217"/>
<dbReference type="EMDB" id="EMD-12218"/>
<dbReference type="EMDB" id="EMD-12219"/>
<dbReference type="EMDB" id="EMD-12261"/>
<dbReference type="EMDB" id="EMD-12573"/>
<dbReference type="EMDB" id="EMD-12574"/>
<dbReference type="EMDB" id="EMD-12575"/>
<dbReference type="EMDB" id="EMD-12635"/>
<dbReference type="EMDB" id="EMD-12636"/>
<dbReference type="EMDB" id="EMD-12693"/>
<dbReference type="EMDB" id="EMD-12694"/>
<dbReference type="EMDB" id="EMD-12695"/>
<dbReference type="EMDB" id="EMD-12928"/>
<dbReference type="EMDB" id="EMD-12929"/>
<dbReference type="EMDB" id="EMD-12930"/>
<dbReference type="EMDB" id="EMD-12936"/>
<dbReference type="EMDB" id="EMD-12937"/>
<dbReference type="EMDB" id="EMD-13055"/>
<dbReference type="EMDB" id="EMD-13180"/>
<dbReference type="EMDB" id="EMD-13458"/>
<dbReference type="EMDB" id="EMD-13459"/>
<dbReference type="EMDB" id="EMD-13461"/>
<dbReference type="EMDB" id="EMD-13462"/>
<dbReference type="EMDB" id="EMD-13463"/>
<dbReference type="EMDB" id="EMD-13464"/>
<dbReference type="EMDB" id="EMD-13465"/>
<dbReference type="EMDB" id="EMD-13805"/>
<dbReference type="EMDB" id="EMD-13952"/>
<dbReference type="EMDB" id="EMD-13955"/>
<dbReference type="EMDB" id="EMD-13956"/>
<dbReference type="EMDB" id="EMD-13958"/>
<dbReference type="EMDB" id="EMD-14121"/>
<dbReference type="EMDB" id="EMD-14454"/>
<dbReference type="EMDB" id="EMD-14846"/>
<dbReference type="EMDB" id="EMD-14850"/>
<dbReference type="EMDB" id="EMD-14864"/>
<dbReference type="EMDB" id="EMD-14865"/>
<dbReference type="EMDB" id="EMD-14956"/>
<dbReference type="EMDB" id="EMD-15116"/>
<dbReference type="EMDB" id="EMD-15488"/>
<dbReference type="EMDB" id="EMD-15523"/>
<dbReference type="EMDB" id="EMD-15533"/>
<dbReference type="EMDB" id="EMD-15558"/>
<dbReference type="EMDB" id="EMD-15712"/>
<dbReference type="EMDB" id="EMD-15793"/>
<dbReference type="EMDB" id="EMD-15905"/>
<dbReference type="EMDB" id="EMD-16015"/>
<dbReference type="EMDB" id="EMD-16029"/>
<dbReference type="EMDB" id="EMD-16031"/>
<dbReference type="EMDB" id="EMD-16047"/>
<dbReference type="EMDB" id="EMD-16057"/>
<dbReference type="EMDB" id="EMD-16059"/>
<dbReference type="EMDB" id="EMD-16062"/>
<dbReference type="EMDB" id="EMD-16065"/>
<dbReference type="EMDB" id="EMD-16081"/>
<dbReference type="EMDB" id="EMD-16082"/>
<dbReference type="EMDB" id="EMD-16494"/>
<dbReference type="EMDB" id="EMD-16495"/>
<dbReference type="EMDB" id="EMD-16496"/>
<dbReference type="EMDB" id="EMD-16497"/>
<dbReference type="EMDB" id="EMD-16498"/>
<dbReference type="EMDB" id="EMD-16499"/>
<dbReference type="EMDB" id="EMD-16500"/>
<dbReference type="EMDB" id="EMD-16501"/>
<dbReference type="EMDB" id="EMD-16502"/>
<dbReference type="EMDB" id="EMD-16503"/>
<dbReference type="EMDB" id="EMD-16505"/>
<dbReference type="EMDB" id="EMD-16506"/>
<dbReference type="EMDB" id="EMD-16530"/>
<dbReference type="EMDB" id="EMD-16613"/>
<dbReference type="EMDB" id="EMD-16641"/>
<dbReference type="EMDB" id="EMD-16646"/>
<dbReference type="EMDB" id="EMD-16652"/>
<dbReference type="EMDB" id="EMD-17346"/>
<dbReference type="EMDB" id="EMD-17347"/>
<dbReference type="EMDB" id="EMD-17348"/>
<dbReference type="EMDB" id="EMD-17631"/>
<dbReference type="EMDB" id="EMD-17667"/>
<dbReference type="EMDB" id="EMD-17743"/>
<dbReference type="EMDB" id="EMD-17959"/>
<dbReference type="EMDB" id="EMD-18145"/>
<dbReference type="EMDB" id="EMD-18320"/>
<dbReference type="EMDB" id="EMD-18458"/>
<dbReference type="EMDB" id="EMD-18534"/>
<dbReference type="EMDB" id="EMD-18875"/>
<dbReference type="EMDB" id="EMD-18950"/>
<dbReference type="EMDB" id="EMD-19004"/>
<dbReference type="EMDB" id="EMD-19054"/>
<dbReference type="EMDB" id="EMD-19055"/>
<dbReference type="EMDB" id="EMD-19058"/>
<dbReference type="EMDB" id="EMD-19059"/>
<dbReference type="EMDB" id="EMD-19426"/>
<dbReference type="EMDB" id="EMD-19427"/>
<dbReference type="EMDB" id="EMD-19428"/>
<dbReference type="EMDB" id="EMD-19429"/>
<dbReference type="EMDB" id="EMD-20048"/>
<dbReference type="EMDB" id="EMD-20052"/>
<dbReference type="EMDB" id="EMD-21420"/>
<dbReference type="EMDB" id="EMD-21421"/>
<dbReference type="EMDB" id="EMD-21422"/>
<dbReference type="EMDB" id="EMD-21625"/>
<dbReference type="EMDB" id="EMD-21630"/>
<dbReference type="EMDB" id="EMD-21631"/>
<dbReference type="EMDB" id="EMD-21632"/>
<dbReference type="EMDB" id="EMD-21633"/>
<dbReference type="EMDB" id="EMD-21634"/>
<dbReference type="EMDB" id="EMD-21635"/>
<dbReference type="EMDB" id="EMD-21636"/>
<dbReference type="EMDB" id="EMD-21637"/>
<dbReference type="EMDB" id="EMD-21638"/>
<dbReference type="EMDB" id="EMD-21639"/>
<dbReference type="EMDB" id="EMD-21640"/>
<dbReference type="EMDB" id="EMD-21641"/>
<dbReference type="EMDB" id="EMD-21856"/>
<dbReference type="EMDB" id="EMD-21857"/>
<dbReference type="EMDB" id="EMD-21858"/>
<dbReference type="EMDB" id="EMD-22459"/>
<dbReference type="EMDB" id="EMD-22461"/>
<dbReference type="EMDB" id="EMD-22464"/>
<dbReference type="EMDB" id="EMD-22466"/>
<dbReference type="EMDB" id="EMD-22469"/>
<dbReference type="EMDB" id="EMD-22472"/>
<dbReference type="EMDB" id="EMD-22669"/>
<dbReference type="EMDB" id="EMD-22670"/>
<dbReference type="EMDB" id="EMD-22671"/>
<dbReference type="EMDB" id="EMD-22672"/>
<dbReference type="EMDB" id="EMD-22673"/>
<dbReference type="EMDB" id="EMD-22674"/>
<dbReference type="EMDB" id="EMD-23528"/>
<dbReference type="EMDB" id="EMD-24120"/>
<dbReference type="EMDB" id="EMD-24132"/>
<dbReference type="EMDB" id="EMD-24133"/>
<dbReference type="EMDB" id="EMD-24134"/>
<dbReference type="EMDB" id="EMD-24135"/>
<dbReference type="EMDB" id="EMD-24136"/>
<dbReference type="EMDB" id="EMD-24803"/>
<dbReference type="EMDB" id="EMD-25405"/>
<dbReference type="EMDB" id="EMD-25407"/>
<dbReference type="EMDB" id="EMD-25409"/>
<dbReference type="EMDB" id="EMD-25410"/>
<dbReference type="EMDB" id="EMD-25411"/>
<dbReference type="EMDB" id="EMD-25415"/>
<dbReference type="EMDB" id="EMD-25418"/>
<dbReference type="EMDB" id="EMD-25420"/>
<dbReference type="EMDB" id="EMD-25421"/>
<dbReference type="EMDB" id="EMD-28197"/>
<dbReference type="EMDB" id="EMD-30215"/>
<dbReference type="EMDB" id="EMD-30598"/>
<dbReference type="EMDB" id="EMD-30611"/>
<dbReference type="EMDB" id="EMD-33660"/>
<dbReference type="EMDB" id="EMD-33661"/>
<dbReference type="EMDB" id="EMD-33662"/>
<dbReference type="EMDB" id="EMD-33663"/>
<dbReference type="EMDB" id="EMD-33664"/>
<dbReference type="EMDB" id="EMD-33665"/>
<dbReference type="EMDB" id="EMD-33904"/>
<dbReference type="EMDB" id="EMD-3489"/>
<dbReference type="EMDB" id="EMD-3490"/>
<dbReference type="EMDB" id="EMD-3492"/>
<dbReference type="EMDB" id="EMD-3493"/>
<dbReference type="EMDB" id="EMD-35001"/>
<dbReference type="EMDB" id="EMD-35020"/>
<dbReference type="EMDB" id="EMD-35022"/>
<dbReference type="EMDB" id="EMD-3508"/>
<dbReference type="EMDB" id="EMD-35411"/>
<dbReference type="EMDB" id="EMD-35412"/>
<dbReference type="EMDB" id="EMD-35939"/>
<dbReference type="EMDB" id="EMD-3617"/>
<dbReference type="EMDB" id="EMD-3713"/>
<dbReference type="EMDB" id="EMD-37271"/>
<dbReference type="EMDB" id="EMD-3730"/>
<dbReference type="EMDB" id="EMD-3898"/>
<dbReference type="EMDB" id="EMD-3899"/>
<dbReference type="EMDB" id="EMD-3903"/>
<dbReference type="EMDB" id="EMD-39577"/>
<dbReference type="EMDB" id="EMD-39578"/>
<dbReference type="EMDB" id="EMD-39579"/>
<dbReference type="EMDB" id="EMD-39580"/>
<dbReference type="EMDB" id="EMD-39581"/>
<dbReference type="EMDB" id="EMD-4001"/>
<dbReference type="EMDB" id="EMD-4121"/>
<dbReference type="EMDB" id="EMD-4122"/>
<dbReference type="EMDB" id="EMD-4123"/>
<dbReference type="EMDB" id="EMD-4124"/>
<dbReference type="EMDB" id="EMD-4125"/>
<dbReference type="EMDB" id="EMD-4126"/>
<dbReference type="EMDB" id="EMD-4378"/>
<dbReference type="EMDB" id="EMD-4379"/>
<dbReference type="EMDB" id="EMD-4380"/>
<dbReference type="EMDB" id="EMD-4381"/>
<dbReference type="EMDB" id="EMD-4382"/>
<dbReference type="EMDB" id="EMD-4383"/>
<dbReference type="EMDB" id="EMD-4476"/>
<dbReference type="EMDB" id="EMD-4477"/>
<dbReference type="EMDB" id="EMD-4478"/>
<dbReference type="EMDB" id="EMD-4638"/>
<dbReference type="EMDB" id="EMD-48479"/>
<dbReference type="EMDB" id="EMD-48513"/>
<dbReference type="EMDB" id="EMD-50296"/>
<dbReference type="EMDB" id="EMD-51318"/>
<dbReference type="EMDB" id="EMD-51340"/>
<dbReference type="EMDB" id="EMD-51828"/>
<dbReference type="EMDB" id="EMD-51829"/>
<dbReference type="EMDB" id="EMD-51830"/>
<dbReference type="EMDB" id="EMD-51831"/>
<dbReference type="EMDB" id="EMD-51832"/>
<dbReference type="EMDB" id="EMD-51833"/>
<dbReference type="EMDB" id="EMD-51834"/>
<dbReference type="EMDB" id="EMD-51835"/>
<dbReference type="EMDB" id="EMD-51836"/>
<dbReference type="EMDB" id="EMD-51837"/>
<dbReference type="EMDB" id="EMD-51838"/>
<dbReference type="EMDB" id="EMD-51839"/>
<dbReference type="EMDB" id="EMD-51840"/>
<dbReference type="EMDB" id="EMD-51841"/>
<dbReference type="EMDB" id="EMD-51842"/>
<dbReference type="EMDB" id="EMD-51843"/>
<dbReference type="EMDB" id="EMD-51973"/>
<dbReference type="EMDB" id="EMD-51974"/>
<dbReference type="EMDB" id="EMD-51975"/>
<dbReference type="EMDB" id="EMD-51976"/>
<dbReference type="EMDB" id="EMD-51977"/>
<dbReference type="EMDB" id="EMD-51978"/>
<dbReference type="EMDB" id="EMD-51979"/>
<dbReference type="EMDB" id="EMD-51981"/>
<dbReference type="EMDB" id="EMD-51982"/>
<dbReference type="EMDB" id="EMD-51983"/>
<dbReference type="EMDB" id="EMD-6667"/>
<dbReference type="EMDB" id="EMD-7289"/>
<dbReference type="EMDB" id="EMD-7341"/>
<dbReference type="EMDB" id="EMD-7970"/>
<dbReference type="EMDB" id="EMD-8000"/>
<dbReference type="EMDB" id="EMD-8001"/>
<dbReference type="EMDB" id="EMD-8002"/>
<dbReference type="EMDB" id="EMD-8003"/>
<dbReference type="EMDB" id="EMD-8004"/>
<dbReference type="EMDB" id="EMD-8107"/>
<dbReference type="EMDB" id="EMD-8175"/>
<dbReference type="EMDB" id="EMD-8176"/>
<dbReference type="EMDB" id="EMD-8237"/>
<dbReference type="EMDB" id="EMD-8238"/>
<dbReference type="EMDB" id="EMD-8279"/>
<dbReference type="EMDB" id="EMD-8280"/>
<dbReference type="EMDB" id="EMD-8281"/>
<dbReference type="EMDB" id="EMD-8282"/>
<dbReference type="EMDB" id="EMD-8505"/>
<dbReference type="EMDB" id="EMD-8615"/>
<dbReference type="EMDB" id="EMD-8616"/>
<dbReference type="EMDB" id="EMD-8617"/>
<dbReference type="EMDB" id="EMD-8618"/>
<dbReference type="EMDB" id="EMD-8619"/>
<dbReference type="EMDB" id="EMD-8620"/>
<dbReference type="EMDB" id="EMD-8813"/>
<dbReference type="EMDB" id="EMD-8814"/>
<dbReference type="EMDB" id="EMD-8815"/>
<dbReference type="EMDB" id="EMD-8828"/>
<dbReference type="SMR" id="P02413"/>
<dbReference type="BioGRID" id="4263394">
    <property type="interactions" value="53"/>
</dbReference>
<dbReference type="BioGRID" id="852110">
    <property type="interactions" value="3"/>
</dbReference>
<dbReference type="ComplexPortal" id="CPX-3807">
    <property type="entry name" value="50S large ribosomal subunit"/>
</dbReference>
<dbReference type="DIP" id="DIP-10752N"/>
<dbReference type="FunCoup" id="P02413">
    <property type="interactions" value="1077"/>
</dbReference>
<dbReference type="IntAct" id="P02413">
    <property type="interactions" value="96"/>
</dbReference>
<dbReference type="STRING" id="511145.b3301"/>
<dbReference type="jPOST" id="P02413"/>
<dbReference type="PaxDb" id="511145-b3301"/>
<dbReference type="EnsemblBacteria" id="AAC76326">
    <property type="protein sequence ID" value="AAC76326"/>
    <property type="gene ID" value="b3301"/>
</dbReference>
<dbReference type="GeneID" id="947798"/>
<dbReference type="KEGG" id="ecj:JW3263"/>
<dbReference type="KEGG" id="eco:b3301"/>
<dbReference type="KEGG" id="ecoc:C3026_17945"/>
<dbReference type="PATRIC" id="fig|1411691.4.peg.3430"/>
<dbReference type="EchoBASE" id="EB0869"/>
<dbReference type="eggNOG" id="COG0200">
    <property type="taxonomic scope" value="Bacteria"/>
</dbReference>
<dbReference type="HOGENOM" id="CLU_055188_4_2_6"/>
<dbReference type="InParanoid" id="P02413"/>
<dbReference type="OMA" id="WFEGGQM"/>
<dbReference type="OrthoDB" id="9810293at2"/>
<dbReference type="PhylomeDB" id="P02413"/>
<dbReference type="BioCyc" id="EcoCyc:EG10876-MONOMER"/>
<dbReference type="BioCyc" id="MetaCyc:EG10876-MONOMER"/>
<dbReference type="EvolutionaryTrace" id="P02413"/>
<dbReference type="PRO" id="PR:P02413"/>
<dbReference type="Proteomes" id="UP000000625">
    <property type="component" value="Chromosome"/>
</dbReference>
<dbReference type="GO" id="GO:0005737">
    <property type="term" value="C:cytoplasm"/>
    <property type="evidence" value="ECO:0000314"/>
    <property type="project" value="ComplexPortal"/>
</dbReference>
<dbReference type="GO" id="GO:0022625">
    <property type="term" value="C:cytosolic large ribosomal subunit"/>
    <property type="evidence" value="ECO:0000314"/>
    <property type="project" value="EcoCyc"/>
</dbReference>
<dbReference type="GO" id="GO:0019843">
    <property type="term" value="F:rRNA binding"/>
    <property type="evidence" value="ECO:0007669"/>
    <property type="project" value="UniProtKB-UniRule"/>
</dbReference>
<dbReference type="GO" id="GO:0003735">
    <property type="term" value="F:structural constituent of ribosome"/>
    <property type="evidence" value="ECO:0000318"/>
    <property type="project" value="GO_Central"/>
</dbReference>
<dbReference type="GO" id="GO:0002181">
    <property type="term" value="P:cytoplasmic translation"/>
    <property type="evidence" value="ECO:0000303"/>
    <property type="project" value="ComplexPortal"/>
</dbReference>
<dbReference type="FunFam" id="3.100.10.10:FF:000003">
    <property type="entry name" value="50S ribosomal protein L15"/>
    <property type="match status" value="1"/>
</dbReference>
<dbReference type="Gene3D" id="3.100.10.10">
    <property type="match status" value="1"/>
</dbReference>
<dbReference type="HAMAP" id="MF_01341">
    <property type="entry name" value="Ribosomal_uL15"/>
    <property type="match status" value="1"/>
</dbReference>
<dbReference type="InterPro" id="IPR030878">
    <property type="entry name" value="Ribosomal_uL15"/>
</dbReference>
<dbReference type="InterPro" id="IPR021131">
    <property type="entry name" value="Ribosomal_uL15/eL18"/>
</dbReference>
<dbReference type="InterPro" id="IPR036227">
    <property type="entry name" value="Ribosomal_uL15/eL18_sf"/>
</dbReference>
<dbReference type="InterPro" id="IPR005749">
    <property type="entry name" value="Ribosomal_uL15_bac-type"/>
</dbReference>
<dbReference type="InterPro" id="IPR001196">
    <property type="entry name" value="Ribosomal_uL15_CS"/>
</dbReference>
<dbReference type="NCBIfam" id="TIGR01071">
    <property type="entry name" value="rplO_bact"/>
    <property type="match status" value="1"/>
</dbReference>
<dbReference type="PANTHER" id="PTHR12934">
    <property type="entry name" value="50S RIBOSOMAL PROTEIN L15"/>
    <property type="match status" value="1"/>
</dbReference>
<dbReference type="PANTHER" id="PTHR12934:SF11">
    <property type="entry name" value="LARGE RIBOSOMAL SUBUNIT PROTEIN UL15M"/>
    <property type="match status" value="1"/>
</dbReference>
<dbReference type="Pfam" id="PF00828">
    <property type="entry name" value="Ribosomal_L27A"/>
    <property type="match status" value="1"/>
</dbReference>
<dbReference type="SUPFAM" id="SSF52080">
    <property type="entry name" value="Ribosomal proteins L15p and L18e"/>
    <property type="match status" value="1"/>
</dbReference>
<dbReference type="PROSITE" id="PS00475">
    <property type="entry name" value="RIBOSOMAL_L15"/>
    <property type="match status" value="1"/>
</dbReference>
<gene>
    <name type="primary">rplO</name>
    <name type="ordered locus">b3301</name>
    <name type="ordered locus">JW3263</name>
</gene>
<proteinExistence type="evidence at protein level"/>
<organism>
    <name type="scientific">Escherichia coli (strain K12)</name>
    <dbReference type="NCBI Taxonomy" id="83333"/>
    <lineage>
        <taxon>Bacteria</taxon>
        <taxon>Pseudomonadati</taxon>
        <taxon>Pseudomonadota</taxon>
        <taxon>Gammaproteobacteria</taxon>
        <taxon>Enterobacterales</taxon>
        <taxon>Enterobacteriaceae</taxon>
        <taxon>Escherichia</taxon>
    </lineage>
</organism>
<evidence type="ECO:0000256" key="1">
    <source>
        <dbReference type="SAM" id="MobiDB-lite"/>
    </source>
</evidence>
<evidence type="ECO:0000269" key="2">
    <source>
    </source>
</evidence>
<evidence type="ECO:0000269" key="3">
    <source>
    </source>
</evidence>
<evidence type="ECO:0000269" key="4">
    <source>
    </source>
</evidence>
<evidence type="ECO:0000269" key="5">
    <source>
    </source>
</evidence>
<evidence type="ECO:0000269" key="6">
    <source>
    </source>
</evidence>
<evidence type="ECO:0000269" key="7">
    <source>
    </source>
</evidence>
<evidence type="ECO:0000269" key="8">
    <source>
    </source>
</evidence>
<evidence type="ECO:0000269" key="9">
    <source>
    </source>
</evidence>
<evidence type="ECO:0000269" key="10">
    <source>
    </source>
</evidence>
<evidence type="ECO:0000269" key="11">
    <source>
    </source>
</evidence>
<evidence type="ECO:0000303" key="12">
    <source>
    </source>
</evidence>
<evidence type="ECO:0000305" key="13"/>
<evidence type="ECO:0007829" key="14">
    <source>
        <dbReference type="PDB" id="6XZ7"/>
    </source>
</evidence>
<evidence type="ECO:0007829" key="15">
    <source>
        <dbReference type="PDB" id="7BL4"/>
    </source>
</evidence>
<evidence type="ECO:0007829" key="16">
    <source>
        <dbReference type="PDB" id="8CAM"/>
    </source>
</evidence>
<evidence type="ECO:0007829" key="17">
    <source>
        <dbReference type="PDB" id="8CGK"/>
    </source>
</evidence>
<name>RL15_ECOLI</name>
<comment type="function">
    <text evidence="10">This protein binds the 5S rRNA. It is required for the late stages of subunit assembly, and is essential for 5S rRNA assembly onto the ribosome.</text>
</comment>
<comment type="subunit">
    <text evidence="2 3 4 5 6 7 8 9 10 11">Part of the 50S ribosomal subunit (PubMed:10094780, PubMed:12809609, PubMed:16272117, PubMed:24844575, PubMed:25310980, PubMed:27906160, PubMed:27906161, PubMed:27934701, PubMed:3298242, PubMed:340263). Contacts the 5S rRNA (PubMed:3298242).</text>
</comment>
<comment type="interaction">
    <interactant intactId="EBI-543017">
        <id>P02413</id>
    </interactant>
    <interactant intactId="EBI-559071">
        <id>P36979</id>
        <label>rlmN</label>
    </interactant>
    <organismsDiffer>false</organismsDiffer>
    <experiments>4</experiments>
</comment>
<comment type="mass spectrometry" mass="14980.1" method="MALDI" evidence="2"/>
<comment type="similarity">
    <text evidence="13">Belongs to the universal ribosomal protein uL15 family.</text>
</comment>
<protein>
    <recommendedName>
        <fullName evidence="12">Large ribosomal subunit protein uL15</fullName>
    </recommendedName>
    <alternativeName>
        <fullName>50S ribosomal protein L15</fullName>
    </alternativeName>
</protein>
<feature type="chain" id="PRO_0000104721" description="Large ribosomal subunit protein uL15">
    <location>
        <begin position="1"/>
        <end position="144"/>
    </location>
</feature>
<feature type="region of interest" description="Disordered" evidence="1">
    <location>
        <begin position="1"/>
        <end position="54"/>
    </location>
</feature>
<feature type="compositionally biased region" description="Gly residues" evidence="1">
    <location>
        <begin position="21"/>
        <end position="31"/>
    </location>
</feature>
<feature type="turn" evidence="14">
    <location>
        <begin position="3"/>
        <end position="5"/>
    </location>
</feature>
<feature type="turn" evidence="15">
    <location>
        <begin position="10"/>
        <end position="12"/>
    </location>
</feature>
<feature type="turn" evidence="16">
    <location>
        <begin position="23"/>
        <end position="26"/>
    </location>
</feature>
<feature type="turn" evidence="17">
    <location>
        <begin position="29"/>
        <end position="32"/>
    </location>
</feature>
<feature type="strand" evidence="17">
    <location>
        <begin position="35"/>
        <end position="37"/>
    </location>
</feature>
<feature type="helix" evidence="17">
    <location>
        <begin position="38"/>
        <end position="40"/>
    </location>
</feature>
<feature type="strand" evidence="17">
    <location>
        <begin position="52"/>
        <end position="54"/>
    </location>
</feature>
<feature type="helix" evidence="17">
    <location>
        <begin position="57"/>
        <end position="60"/>
    </location>
</feature>
<feature type="helix" evidence="17">
    <location>
        <begin position="69"/>
        <end position="72"/>
    </location>
</feature>
<feature type="strand" evidence="17">
    <location>
        <begin position="74"/>
        <end position="78"/>
    </location>
</feature>
<feature type="helix" evidence="17">
    <location>
        <begin position="79"/>
        <end position="84"/>
    </location>
</feature>
<feature type="strand" evidence="17">
    <location>
        <begin position="85"/>
        <end position="91"/>
    </location>
</feature>
<feature type="helix" evidence="17">
    <location>
        <begin position="92"/>
        <end position="97"/>
    </location>
</feature>
<feature type="strand" evidence="17">
    <location>
        <begin position="107"/>
        <end position="112"/>
    </location>
</feature>
<feature type="strand" evidence="17">
    <location>
        <begin position="121"/>
        <end position="124"/>
    </location>
</feature>
<feature type="helix" evidence="17">
    <location>
        <begin position="129"/>
        <end position="137"/>
    </location>
</feature>
<feature type="strand" evidence="17">
    <location>
        <begin position="141"/>
        <end position="143"/>
    </location>
</feature>
<reference key="1">
    <citation type="journal article" date="1977" name="FEBS Lett.">
        <title>The primary structure of protein L15 located at the peptidyltransferase center of Escherichia coli ribosomes.</title>
        <authorList>
            <person name="Giorginis S."/>
            <person name="Chen R."/>
        </authorList>
    </citation>
    <scope>PROTEIN SEQUENCE</scope>
    <scope>SUBUNIT</scope>
    <source>
        <strain>K</strain>
    </source>
</reference>
<reference key="2">
    <citation type="journal article" date="1983" name="Nucleic Acids Res.">
        <title>The spc ribosomal protein operon of Escherichia coli: sequence and cotranscription of the ribosomal protein genes and a protein export gene.</title>
        <authorList>
            <person name="Cerretti D.P."/>
            <person name="Dean D."/>
            <person name="Davis G.R."/>
            <person name="Bedwell D.M."/>
            <person name="Nomura M."/>
        </authorList>
    </citation>
    <scope>NUCLEOTIDE SEQUENCE [GENOMIC DNA]</scope>
    <source>
        <strain>K12</strain>
    </source>
</reference>
<reference key="3">
    <citation type="journal article" date="1997" name="Science">
        <title>The complete genome sequence of Escherichia coli K-12.</title>
        <authorList>
            <person name="Blattner F.R."/>
            <person name="Plunkett G. III"/>
            <person name="Bloch C.A."/>
            <person name="Perna N.T."/>
            <person name="Burland V."/>
            <person name="Riley M."/>
            <person name="Collado-Vides J."/>
            <person name="Glasner J.D."/>
            <person name="Rode C.K."/>
            <person name="Mayhew G.F."/>
            <person name="Gregor J."/>
            <person name="Davis N.W."/>
            <person name="Kirkpatrick H.A."/>
            <person name="Goeden M.A."/>
            <person name="Rose D.J."/>
            <person name="Mau B."/>
            <person name="Shao Y."/>
        </authorList>
    </citation>
    <scope>NUCLEOTIDE SEQUENCE [LARGE SCALE GENOMIC DNA]</scope>
    <source>
        <strain>K12 / MG1655 / ATCC 47076</strain>
    </source>
</reference>
<reference key="4">
    <citation type="journal article" date="2006" name="Mol. Syst. Biol.">
        <title>Highly accurate genome sequences of Escherichia coli K-12 strains MG1655 and W3110.</title>
        <authorList>
            <person name="Hayashi K."/>
            <person name="Morooka N."/>
            <person name="Yamamoto Y."/>
            <person name="Fujita K."/>
            <person name="Isono K."/>
            <person name="Choi S."/>
            <person name="Ohtsubo E."/>
            <person name="Baba T."/>
            <person name="Wanner B.L."/>
            <person name="Mori H."/>
            <person name="Horiuchi T."/>
        </authorList>
    </citation>
    <scope>NUCLEOTIDE SEQUENCE [LARGE SCALE GENOMIC DNA]</scope>
    <source>
        <strain>K12 / W3110 / ATCC 27325 / DSM 5911</strain>
    </source>
</reference>
<reference key="5">
    <citation type="journal article" date="1987" name="J. Biol. Chem.">
        <title>Incorporation of six additional proteins to complete the assembly map of the 50 S subunit from Escherichia coli ribosomes.</title>
        <authorList>
            <person name="Herold M."/>
            <person name="Nierhaus K.H."/>
        </authorList>
    </citation>
    <scope>ASSEMBLY MAP OF THE 50S SUBUNIT</scope>
    <source>
        <strain>K12</strain>
    </source>
</reference>
<reference key="6">
    <citation type="journal article" date="1999" name="Anal. Biochem.">
        <title>Observation of Escherichia coli ribosomal proteins and their posttranslational modifications by mass spectrometry.</title>
        <authorList>
            <person name="Arnold R.J."/>
            <person name="Reilly J.P."/>
        </authorList>
    </citation>
    <scope>MASS SPECTROMETRY</scope>
    <scope>SUBUNIT</scope>
    <source>
        <strain>K12 / ATCC 25404 / DSM 5698 / NCIMB 11290</strain>
    </source>
</reference>
<reference key="7">
    <citation type="journal article" date="2014" name="Curr. Opin. Struct. Biol.">
        <title>A new system for naming ribosomal proteins.</title>
        <authorList>
            <person name="Ban N."/>
            <person name="Beckmann R."/>
            <person name="Cate J.H.D."/>
            <person name="Dinman J.D."/>
            <person name="Dragon F."/>
            <person name="Ellis S.R."/>
            <person name="Lafontaine D.L.J."/>
            <person name="Lindahl L."/>
            <person name="Liljas A."/>
            <person name="Lipton J.M."/>
            <person name="McAlear M.A."/>
            <person name="Moore P.B."/>
            <person name="Noller H.F."/>
            <person name="Ortega J."/>
            <person name="Panse V.G."/>
            <person name="Ramakrishnan V."/>
            <person name="Spahn C.M.T."/>
            <person name="Steitz T.A."/>
            <person name="Tchorzewski M."/>
            <person name="Tollervey D."/>
            <person name="Warren A.J."/>
            <person name="Williamson J.R."/>
            <person name="Wilson D."/>
            <person name="Yonath A."/>
            <person name="Yusupov M."/>
        </authorList>
    </citation>
    <scope>NOMENCLATURE</scope>
</reference>
<reference key="8">
    <citation type="journal article" date="2003" name="Cell">
        <title>Study of the structural dynamics of the E. coli 70S ribosome using real-space refinement.</title>
        <authorList>
            <person name="Gao H."/>
            <person name="Sengupta J."/>
            <person name="Valle M."/>
            <person name="Korostelev A."/>
            <person name="Eswar N."/>
            <person name="Stagg S.M."/>
            <person name="Van Roey P."/>
            <person name="Agrawal R.K."/>
            <person name="Harvey S.C."/>
            <person name="Sali A."/>
            <person name="Chapman M.S."/>
            <person name="Frank J."/>
        </authorList>
    </citation>
    <scope>STRUCTURE BY ELECTRON MICROSCOPY (11.50 ANGSTROMS)</scope>
    <scope>SUBUNIT</scope>
    <source>
        <strain>MRE-600</strain>
    </source>
</reference>
<reference key="9">
    <citation type="journal article" date="2005" name="Science">
        <title>Structures of the bacterial ribosome at 3.5 A resolution.</title>
        <authorList>
            <person name="Schuwirth B.S."/>
            <person name="Borovinskaya M.A."/>
            <person name="Hau C.W."/>
            <person name="Zhang W."/>
            <person name="Vila-Sanjurjo A."/>
            <person name="Holton J.M."/>
            <person name="Cate J.H.D."/>
        </authorList>
    </citation>
    <scope>X-RAY CRYSTALLOGRAPHY (3.46 ANGSTROMS) OF 2 DIFFERENT RIBOSOME STRUCTURES</scope>
    <scope>SUBUNIT</scope>
    <source>
        <strain>MRE-600</strain>
    </source>
</reference>
<reference key="10">
    <citation type="journal article" date="2014" name="Cell Rep.">
        <title>Molecular basis for the ribosome functioning as an L-tryptophan sensor.</title>
        <authorList>
            <person name="Bischoff L."/>
            <person name="Berninghausen O."/>
            <person name="Beckmann R."/>
        </authorList>
    </citation>
    <scope>STRUCTURE BY ELECTRON MICROSCOPY (3.80 ANGSTROMS) OF 2-144 IN TNAC-STALLED 50S RIBOSOMAL SUBUNIT</scope>
    <scope>SUBUNIT</scope>
    <source>
        <strain>K12 / A19 / KC6</strain>
    </source>
</reference>
<reference key="11">
    <citation type="journal article" date="2014" name="PLoS Biol.">
        <title>Structural and functional insights into the mode of action of a universally conserved Obg GTPase.</title>
        <authorList>
            <person name="Feng B."/>
            <person name="Mandava C.S."/>
            <person name="Guo Q."/>
            <person name="Wang J."/>
            <person name="Cao W."/>
            <person name="Li N."/>
            <person name="Zhang Y."/>
            <person name="Zhang Y."/>
            <person name="Wang Z."/>
            <person name="Wu J."/>
            <person name="Sanyal S."/>
            <person name="Lei J."/>
            <person name="Gao N."/>
        </authorList>
    </citation>
    <scope>STRUCTURE BY ELECTRON MICROSCOPY (5.5 ANGSTROMS) OF 2-144 OF 50S RIBOSOMAL SUBUNIT IN COMPLEX WITH OBGE AND GMP-PNP</scope>
    <scope>SUBUNIT</scope>
</reference>
<reference key="12">
    <citation type="journal article" date="2017" name="Nature">
        <title>Mechanistic insights into the alternative translation termination by ArfA and RF2.</title>
        <authorList>
            <person name="Ma C."/>
            <person name="Kurita D."/>
            <person name="Li N."/>
            <person name="Chen Y."/>
            <person name="Himeno H."/>
            <person name="Gao N."/>
        </authorList>
    </citation>
    <scope>STRUCTURE BY ELECTRON MICROSCOPY (3.0 ANGSTROMS) OF 70S RIBOSOME IN COMPLEX WITH ARFA AND RF2</scope>
    <scope>SUBUNIT</scope>
</reference>
<reference key="13">
    <citation type="journal article" date="2017" name="Nature">
        <title>Structural basis for ArfA-RF2-mediated translation termination on mRNAs lacking stop codons.</title>
        <authorList>
            <person name="Huter P."/>
            <person name="Mueller C."/>
            <person name="Beckert B."/>
            <person name="Arenz S."/>
            <person name="Berninghausen O."/>
            <person name="Beckmann R."/>
            <person name="Wilson D.N."/>
        </authorList>
    </citation>
    <scope>STRUCTURE BY ELECTRON MICROSCOPY (3.1 ANGSTROMS) OF 70S RIBOSOME IN COMPLEX WITH ARFA AND RF2</scope>
    <scope>SUBUNIT</scope>
</reference>
<reference key="14">
    <citation type="journal article" date="2016" name="Science">
        <title>Translational termination without a stop codon.</title>
        <authorList>
            <person name="James N.R."/>
            <person name="Brown A."/>
            <person name="Gordiyenko Y."/>
            <person name="Ramakrishnan V."/>
        </authorList>
    </citation>
    <scope>STRUCTURE BY ELECTRON MICROSCOPY (2.97 ANGSTROMS) OF 70S RIBOSOME IN COMPLEX WITH ARFA AND RF2</scope>
    <scope>SUBUNIT</scope>
</reference>
<reference key="15">
    <citation type="journal article" date="2017" name="Nature">
        <title>Structural basis of co-translational quality control by ArfA and RF2 bound to ribosome.</title>
        <authorList>
            <person name="Zeng F."/>
            <person name="Chen Y."/>
            <person name="Remis J."/>
            <person name="Shekhar M."/>
            <person name="Phillips J.C."/>
            <person name="Tajkhorshid E."/>
            <person name="Jin H."/>
        </authorList>
    </citation>
    <scope>STRUCTURE BY ELECTRON MICROSCOPY (3.52 ANGSTROMS) OF 70S RIBOSOME IN COMPLEX WITH ARFA AND RF2</scope>
    <scope>SUBUNIT</scope>
</reference>
<accession>P02413</accession>
<accession>Q2M6W6</accession>